<protein>
    <recommendedName>
        <fullName>HLA class I histocompatibility antigen, alpha chain E</fullName>
    </recommendedName>
    <alternativeName>
        <fullName>MHC class I antigen E</fullName>
    </alternativeName>
    <component>
        <recommendedName>
            <fullName>Soluble HLA class I histocompatibility antigen, alpha chain E</fullName>
            <shortName evidence="35">sHLA-E</shortName>
        </recommendedName>
    </component>
</protein>
<proteinExistence type="evidence at protein level"/>
<name>HLAE_HUMAN</name>
<organism>
    <name type="scientific">Homo sapiens</name>
    <name type="common">Human</name>
    <dbReference type="NCBI Taxonomy" id="9606"/>
    <lineage>
        <taxon>Eukaryota</taxon>
        <taxon>Metazoa</taxon>
        <taxon>Chordata</taxon>
        <taxon>Craniata</taxon>
        <taxon>Vertebrata</taxon>
        <taxon>Euteleostomi</taxon>
        <taxon>Mammalia</taxon>
        <taxon>Eutheria</taxon>
        <taxon>Euarchontoglires</taxon>
        <taxon>Primates</taxon>
        <taxon>Haplorrhini</taxon>
        <taxon>Catarrhini</taxon>
        <taxon>Hominidae</taxon>
        <taxon>Homo</taxon>
    </lineage>
</organism>
<reference key="1">
    <citation type="journal article" date="1988" name="J. Immunol.">
        <title>Isolation and nucleotide sequence of a cDNA clone encoding a novel HLA class I gene.</title>
        <authorList>
            <person name="Mizuno S."/>
            <person name="Trapani J.A."/>
            <person name="Koller B.H."/>
            <person name="Dupont B."/>
            <person name="Yang S.Y."/>
        </authorList>
    </citation>
    <scope>NUCLEOTIDE SEQUENCE [MRNA] (ALLELE E*01:01)</scope>
</reference>
<reference key="2">
    <citation type="journal article" date="1999" name="Eur. J. Immunol.">
        <title>Cell surface expression of HLA-E: interaction with human beta-2 microglobulin and allelic differences.</title>
        <authorList>
            <person name="Ulbrecht M."/>
            <person name="Courturier A."/>
            <person name="Martinozzi S."/>
            <person name="Pla M."/>
            <person name="Srivastava R."/>
            <person name="Peterson P.A."/>
            <person name="Weiss E.H."/>
        </authorList>
    </citation>
    <scope>NUCLEOTIDE SEQUENCE [MRNA] (ALLELES E*01:01 AND E*01:03)</scope>
</reference>
<reference key="3">
    <citation type="journal article" date="1988" name="J. Immunol.">
        <title>HLA-E. A novel HLA class I gene expressed in resting T lymphocytes.</title>
        <authorList>
            <person name="Koller B.H."/>
            <person name="Geraghty D.E."/>
            <person name="Shimizu Y."/>
            <person name="Demars R."/>
            <person name="Orr H.T."/>
        </authorList>
    </citation>
    <scope>NUCLEOTIDE SEQUENCE [GENOMIC DNA]</scope>
    <scope>TISSUE SPECIFICITY</scope>
</reference>
<reference key="4">
    <citation type="journal article" date="1990" name="Immunogenetics">
        <title>Polymorphism in the human class I MHC locus HLA-E in Japanese.</title>
        <authorList>
            <person name="Ohya K."/>
            <person name="Kondo K."/>
            <person name="Mizuno S."/>
        </authorList>
    </citation>
    <scope>NUCLEOTIDE SEQUENCE [GENOMIC DNA] OF 112-203 (ALLELE E*01:04)</scope>
    <source>
        <tissue>Peripheral blood</tissue>
    </source>
</reference>
<reference key="5">
    <citation type="journal article" date="2006" name="Genetics">
        <title>Rapid evolution of major histocompatibility complex class I genes in primates generates new disease alleles in humans via hitchhiking diversity.</title>
        <authorList>
            <person name="Shiina T."/>
            <person name="Ota M."/>
            <person name="Shimizu S."/>
            <person name="Katsuyama Y."/>
            <person name="Hashimoto N."/>
            <person name="Takasu M."/>
            <person name="Anzai T."/>
            <person name="Kulski J.K."/>
            <person name="Kikkawa E."/>
            <person name="Naruse T."/>
            <person name="Kimura N."/>
            <person name="Yanagiya K."/>
            <person name="Watanabe A."/>
            <person name="Hosomichi K."/>
            <person name="Kohara S."/>
            <person name="Iwamoto C."/>
            <person name="Umehara Y."/>
            <person name="Meyer A."/>
            <person name="Wanner V."/>
            <person name="Sano K."/>
            <person name="Macquin C."/>
            <person name="Ikeo K."/>
            <person name="Tokunaga K."/>
            <person name="Gojobori T."/>
            <person name="Inoko H."/>
            <person name="Bahram S."/>
        </authorList>
    </citation>
    <scope>NUCLEOTIDE SEQUENCE [GENOMIC DNA] (ALLELE E*01:03)</scope>
</reference>
<reference key="6">
    <citation type="journal article" date="2006" name="Immunogenetics">
        <title>HLA-E, HLA-F, and HLA-G polymorphism: genomic sequence defines haplotype structure and variation spanning the nonclassical class I genes.</title>
        <authorList>
            <person name="Pyo C.W."/>
            <person name="Williams L.M."/>
            <person name="Moore Y."/>
            <person name="Hyodo H."/>
            <person name="Li S.S."/>
            <person name="Zhao L.P."/>
            <person name="Sageshima N."/>
            <person name="Ishitani A."/>
            <person name="Geraghty D.E."/>
        </authorList>
    </citation>
    <scope>NUCLEOTIDE SEQUENCE [GENOMIC DNA] (ALLELE E*01:03)</scope>
</reference>
<reference key="7">
    <citation type="journal article" date="2017" name="HLA">
        <title>New insights in HLA-E polymorphism by refined analysis of the full-length gene.</title>
        <authorList>
            <person name="Olieslagers T.I."/>
            <person name="Voorter C.E."/>
            <person name="Groeneweg M."/>
            <person name="Xu Y."/>
            <person name="Wieten L."/>
            <person name="Tilanus M.G."/>
        </authorList>
    </citation>
    <scope>NUCLEOTIDE SEQUENCE [GENOMIC DNA] (ALLELE E*01:03:01:03 AND ALLELE E*01:03:01:04)</scope>
</reference>
<reference key="8">
    <citation type="submission" date="2003-01" db="EMBL/GenBank/DDBJ databases">
        <title>A new variant of HLA-E*010303 with three synonymous mutations.</title>
        <authorList>
            <person name="He X."/>
            <person name="Xu L."/>
            <person name="Liu Y."/>
            <person name="Zeng Y."/>
        </authorList>
    </citation>
    <scope>NUCLEOTIDE SEQUENCE [MRNA] (ALLELE E*01:03)</scope>
</reference>
<reference key="9">
    <citation type="submission" date="2003-01" db="EMBL/GenBank/DDBJ databases">
        <title>Cloning of HLA-E cDNA from activated peripheral leukocytes.</title>
        <authorList>
            <person name="He X."/>
            <person name="Xu L."/>
            <person name="Liu Y."/>
            <person name="Zeng Y."/>
        </authorList>
    </citation>
    <scope>NUCLEOTIDE SEQUENCE [MRNA] (ALLELE E*01:03)</scope>
</reference>
<reference key="10">
    <citation type="submission" date="2016-08" db="EMBL/GenBank/DDBJ databases">
        <title>Characterization of genomic full-length sequence of HLA-E in Chinese individuals.</title>
        <authorList>
            <person name="Xu Y."/>
            <person name="Wang S."/>
        </authorList>
    </citation>
    <scope>NUCLEOTIDE SEQUENCE [GENOMIC DNA] (ALLELE E*01:03)</scope>
</reference>
<reference key="11">
    <citation type="submission" date="2010-05" db="EMBL/GenBank/DDBJ databases">
        <title>A new HLA-E allele in the Brazilian population.</title>
        <authorList>
            <person name="Veiga-Castelli L.C."/>
            <person name="Castelli E.C."/>
            <person name="Silva-Junior W.A."/>
            <person name="Donadi E.A."/>
        </authorList>
    </citation>
    <scope>NUCLEOTIDE SEQUENCE [GENOMIC DNA] OF 1-295</scope>
    <scope>VARIANT ARG-128</scope>
</reference>
<reference key="12">
    <citation type="submission" date="1999-09" db="EMBL/GenBank/DDBJ databases">
        <title>Homo sapiens 2,229,817bp genomic DNA of 6p21.3 HLA class I region.</title>
        <authorList>
            <person name="Shiina S."/>
            <person name="Tamiya G."/>
            <person name="Oka A."/>
            <person name="Inoko H."/>
        </authorList>
    </citation>
    <scope>NUCLEOTIDE SEQUENCE [LARGE SCALE GENOMIC DNA] (ALLELE E*01:01)</scope>
</reference>
<reference key="13">
    <citation type="journal article" date="2003" name="Nature">
        <title>The DNA sequence and analysis of human chromosome 6.</title>
        <authorList>
            <person name="Mungall A.J."/>
            <person name="Palmer S.A."/>
            <person name="Sims S.K."/>
            <person name="Edwards C.A."/>
            <person name="Ashurst J.L."/>
            <person name="Wilming L."/>
            <person name="Jones M.C."/>
            <person name="Horton R."/>
            <person name="Hunt S.E."/>
            <person name="Scott C.E."/>
            <person name="Gilbert J.G.R."/>
            <person name="Clamp M.E."/>
            <person name="Bethel G."/>
            <person name="Milne S."/>
            <person name="Ainscough R."/>
            <person name="Almeida J.P."/>
            <person name="Ambrose K.D."/>
            <person name="Andrews T.D."/>
            <person name="Ashwell R.I.S."/>
            <person name="Babbage A.K."/>
            <person name="Bagguley C.L."/>
            <person name="Bailey J."/>
            <person name="Banerjee R."/>
            <person name="Barker D.J."/>
            <person name="Barlow K.F."/>
            <person name="Bates K."/>
            <person name="Beare D.M."/>
            <person name="Beasley H."/>
            <person name="Beasley O."/>
            <person name="Bird C.P."/>
            <person name="Blakey S.E."/>
            <person name="Bray-Allen S."/>
            <person name="Brook J."/>
            <person name="Brown A.J."/>
            <person name="Brown J.Y."/>
            <person name="Burford D.C."/>
            <person name="Burrill W."/>
            <person name="Burton J."/>
            <person name="Carder C."/>
            <person name="Carter N.P."/>
            <person name="Chapman J.C."/>
            <person name="Clark S.Y."/>
            <person name="Clark G."/>
            <person name="Clee C.M."/>
            <person name="Clegg S."/>
            <person name="Cobley V."/>
            <person name="Collier R.E."/>
            <person name="Collins J.E."/>
            <person name="Colman L.K."/>
            <person name="Corby N.R."/>
            <person name="Coville G.J."/>
            <person name="Culley K.M."/>
            <person name="Dhami P."/>
            <person name="Davies J."/>
            <person name="Dunn M."/>
            <person name="Earthrowl M.E."/>
            <person name="Ellington A.E."/>
            <person name="Evans K.A."/>
            <person name="Faulkner L."/>
            <person name="Francis M.D."/>
            <person name="Frankish A."/>
            <person name="Frankland J."/>
            <person name="French L."/>
            <person name="Garner P."/>
            <person name="Garnett J."/>
            <person name="Ghori M.J."/>
            <person name="Gilby L.M."/>
            <person name="Gillson C.J."/>
            <person name="Glithero R.J."/>
            <person name="Grafham D.V."/>
            <person name="Grant M."/>
            <person name="Gribble S."/>
            <person name="Griffiths C."/>
            <person name="Griffiths M.N.D."/>
            <person name="Hall R."/>
            <person name="Halls K.S."/>
            <person name="Hammond S."/>
            <person name="Harley J.L."/>
            <person name="Hart E.A."/>
            <person name="Heath P.D."/>
            <person name="Heathcott R."/>
            <person name="Holmes S.J."/>
            <person name="Howden P.J."/>
            <person name="Howe K.L."/>
            <person name="Howell G.R."/>
            <person name="Huckle E."/>
            <person name="Humphray S.J."/>
            <person name="Humphries M.D."/>
            <person name="Hunt A.R."/>
            <person name="Johnson C.M."/>
            <person name="Joy A.A."/>
            <person name="Kay M."/>
            <person name="Keenan S.J."/>
            <person name="Kimberley A.M."/>
            <person name="King A."/>
            <person name="Laird G.K."/>
            <person name="Langford C."/>
            <person name="Lawlor S."/>
            <person name="Leongamornlert D.A."/>
            <person name="Leversha M."/>
            <person name="Lloyd C.R."/>
            <person name="Lloyd D.M."/>
            <person name="Loveland J.E."/>
            <person name="Lovell J."/>
            <person name="Martin S."/>
            <person name="Mashreghi-Mohammadi M."/>
            <person name="Maslen G.L."/>
            <person name="Matthews L."/>
            <person name="McCann O.T."/>
            <person name="McLaren S.J."/>
            <person name="McLay K."/>
            <person name="McMurray A."/>
            <person name="Moore M.J.F."/>
            <person name="Mullikin J.C."/>
            <person name="Niblett D."/>
            <person name="Nickerson T."/>
            <person name="Novik K.L."/>
            <person name="Oliver K."/>
            <person name="Overton-Larty E.K."/>
            <person name="Parker A."/>
            <person name="Patel R."/>
            <person name="Pearce A.V."/>
            <person name="Peck A.I."/>
            <person name="Phillimore B.J.C.T."/>
            <person name="Phillips S."/>
            <person name="Plumb R.W."/>
            <person name="Porter K.M."/>
            <person name="Ramsey Y."/>
            <person name="Ranby S.A."/>
            <person name="Rice C.M."/>
            <person name="Ross M.T."/>
            <person name="Searle S.M."/>
            <person name="Sehra H.K."/>
            <person name="Sheridan E."/>
            <person name="Skuce C.D."/>
            <person name="Smith S."/>
            <person name="Smith M."/>
            <person name="Spraggon L."/>
            <person name="Squares S.L."/>
            <person name="Steward C.A."/>
            <person name="Sycamore N."/>
            <person name="Tamlyn-Hall G."/>
            <person name="Tester J."/>
            <person name="Theaker A.J."/>
            <person name="Thomas D.W."/>
            <person name="Thorpe A."/>
            <person name="Tracey A."/>
            <person name="Tromans A."/>
            <person name="Tubby B."/>
            <person name="Wall M."/>
            <person name="Wallis J.M."/>
            <person name="West A.P."/>
            <person name="White S.S."/>
            <person name="Whitehead S.L."/>
            <person name="Whittaker H."/>
            <person name="Wild A."/>
            <person name="Willey D.J."/>
            <person name="Wilmer T.E."/>
            <person name="Wood J.M."/>
            <person name="Wray P.W."/>
            <person name="Wyatt J.C."/>
            <person name="Young L."/>
            <person name="Younger R.M."/>
            <person name="Bentley D.R."/>
            <person name="Coulson A."/>
            <person name="Durbin R.M."/>
            <person name="Hubbard T."/>
            <person name="Sulston J.E."/>
            <person name="Dunham I."/>
            <person name="Rogers J."/>
            <person name="Beck S."/>
        </authorList>
    </citation>
    <scope>NUCLEOTIDE SEQUENCE [LARGE SCALE GENOMIC DNA]</scope>
</reference>
<reference key="14">
    <citation type="journal article" date="2004" name="Genome Res.">
        <title>The status, quality, and expansion of the NIH full-length cDNA project: the Mammalian Gene Collection (MGC).</title>
        <authorList>
            <consortium name="The MGC Project Team"/>
        </authorList>
    </citation>
    <scope>NUCLEOTIDE SEQUENCE [LARGE SCALE MRNA] (ALLELE E*01:01 AND ALLELE E*01:03)</scope>
    <source>
        <tissue>Lung</tissue>
        <tissue>Ovarian adenocarcinoma</tissue>
        <tissue>Pancreas</tissue>
    </source>
</reference>
<reference key="15">
    <citation type="journal article" date="1998" name="Curr. Biol.">
        <title>TAP- and tapasin-dependent HLA-E surface expression correlates with the binding of an MHC class I leader peptide.</title>
        <authorList>
            <person name="Braud V.M."/>
            <person name="Allan D.S."/>
            <person name="Wilson D."/>
            <person name="McMichael A.J."/>
        </authorList>
    </citation>
    <scope>SUBUNIT</scope>
    <scope>SUBCELLULAR LOCATION</scope>
    <scope>INTERACTION WITH B2M</scope>
    <scope>INTERACTION WITH CALR AND TAP2</scope>
</reference>
<reference key="16">
    <citation type="journal article" date="1998" name="Eur. J. Immunol.">
        <title>HLA-E-bound peptides influence recognition by inhibitory and triggering CD94/NKG2 receptors: preferential response to an HLA-G-derived nonamer.</title>
        <authorList>
            <person name="Llano M."/>
            <person name="Lee N."/>
            <person name="Navarro F."/>
            <person name="Garcia P."/>
            <person name="Albar J.P."/>
            <person name="Geraghty D.E."/>
            <person name="Lopez-Botet M."/>
        </authorList>
    </citation>
    <scope>FUNCTION</scope>
    <scope>SUBUNIT</scope>
</reference>
<reference key="17">
    <citation type="journal article" date="1998" name="Nature">
        <title>HLA-E binds to natural killer cell receptors CD94/NKG2A, B and C.</title>
        <authorList>
            <person name="Braud V.M."/>
            <person name="Allan D.S."/>
            <person name="O'Callaghan C.A."/>
            <person name="Soederstroem K."/>
            <person name="D'Andrea A."/>
            <person name="Ogg G.S."/>
            <person name="Lazetic S."/>
            <person name="Young N.T."/>
            <person name="Bell J.I."/>
            <person name="Phillips J.H."/>
            <person name="Lanier L.L."/>
            <person name="McMichael A.J."/>
        </authorList>
    </citation>
    <scope>FUNCTION</scope>
    <scope>SUBUNIT</scope>
    <scope>INTERACTION WITH KLRD1-KLRC1</scope>
</reference>
<reference key="18">
    <citation type="journal article" date="2000" name="J. Immunol.">
        <title>The human cytomegalovirus UL40 gene product contains a ligand for HLA-E and prevents NK cell-mediated lysis.</title>
        <authorList>
            <person name="Ulbrecht M."/>
            <person name="Martinozzi S."/>
            <person name="Grzeschik M."/>
            <person name="Hengel H."/>
            <person name="Ellwart J.W."/>
            <person name="Pla M."/>
            <person name="Weiss E.H."/>
        </authorList>
    </citation>
    <scope>FUNCTION (MICROBIAL INFECTION)</scope>
</reference>
<reference key="19">
    <citation type="journal article" date="2002" name="J. Exp. Med.">
        <title>A signal peptide derived from hsp60 binds HLA-E and interferes with CD94/NKG2A recognition.</title>
        <authorList>
            <person name="Michaelsson J."/>
            <person name="Teixeira de Matos C."/>
            <person name="Achour A."/>
            <person name="Lanier L.L."/>
            <person name="Kaerre K."/>
            <person name="Soederstroem K."/>
        </authorList>
    </citation>
    <scope>FUNCTION</scope>
</reference>
<reference key="20">
    <citation type="journal article" date="2005" name="Antivir. Ther.">
        <title>HIV-1 infection leads to increased HLA-E expression resulting in impaired function of natural killer cells.</title>
        <authorList>
            <person name="Nattermann J."/>
            <person name="Nischalke H.D."/>
            <person name="Hofmeister V."/>
            <person name="Kupfer B."/>
            <person name="Ahlenstiel G."/>
            <person name="Feldmann G."/>
            <person name="Rockstroh J."/>
            <person name="Weiss E.H."/>
            <person name="Sauerbruch T."/>
            <person name="Spengler U."/>
        </authorList>
    </citation>
    <scope>FUNCTION (MICROBIAL INFECTION)</scope>
</reference>
<reference key="21">
    <citation type="journal article" date="2007" name="Blood">
        <title>Expression and release of soluble HLA-E is an immunoregulatory feature of endothelial cell activation.</title>
        <authorList>
            <person name="Coupel S."/>
            <person name="Moreau A."/>
            <person name="Hamidou M."/>
            <person name="Horejsi V."/>
            <person name="Soulillou J.P."/>
            <person name="Charreau B."/>
        </authorList>
    </citation>
    <scope>TISSUE SPECIFICITY</scope>
    <scope>INDUCTION BY PRO-INFLAMMATORY CYTOKINES</scope>
    <scope>FUNCTION</scope>
    <scope>PTM</scope>
    <scope>SUBCELLULAR LOCATION</scope>
    <scope>DEVELOPMENTAL STAGE</scope>
</reference>
<reference key="22">
    <citation type="journal article" date="2007" name="Immunity">
        <title>The heterodimeric assembly of the CD94-NKG2 receptor family and implications for human leukocyte antigen-E recognition.</title>
        <authorList>
            <person name="Sullivan L.C."/>
            <person name="Clements C.S."/>
            <person name="Beddoe T."/>
            <person name="Johnson D."/>
            <person name="Hoare H.L."/>
            <person name="Lin J."/>
            <person name="Huyton T."/>
            <person name="Hopkins E.J."/>
            <person name="Reid H.H."/>
            <person name="Wilce M.C."/>
            <person name="Kabat J."/>
            <person name="Borrego F."/>
            <person name="Coligan J.E."/>
            <person name="Rossjohn J."/>
            <person name="Brooks A.G."/>
        </authorList>
    </citation>
    <scope>FUNCTION</scope>
    <scope>SUBUNIT</scope>
    <scope>INTERACTION WITH KLRD1-KLRC1 AND KLRD1-KLRC2</scope>
    <scope>MUTAGENESIS OF ARG-83; ARG-86; ASP-90; GLN-93; ARG-96; VAL-97; ARG-100; GLU-110; ARG-129; LYS-167; ASP-170; GLU-173; GLU-175; HIS-176; ASP-183; GLU-187 AND THR-235</scope>
</reference>
<reference key="23">
    <citation type="journal article" date="2009" name="Nat. Biotechnol.">
        <title>Mass-spectrometric identification and relative quantification of N-linked cell surface glycoproteins.</title>
        <authorList>
            <person name="Wollscheid B."/>
            <person name="Bausch-Fluck D."/>
            <person name="Henderson C."/>
            <person name="O'Brien R."/>
            <person name="Bibel M."/>
            <person name="Schiess R."/>
            <person name="Aebersold R."/>
            <person name="Watts J.D."/>
        </authorList>
    </citation>
    <scope>GLYCOSYLATION [LARGE SCALE ANALYSIS] AT ASN-107</scope>
    <source>
        <tissue>Leukemic T-cell</tissue>
    </source>
</reference>
<reference key="24">
    <citation type="journal article" date="2010" name="J. Immunol.">
        <title>HLA-F complex without peptide binds to MHC class I protein in the open conformer form.</title>
        <authorList>
            <person name="Goodridge J.P."/>
            <person name="Burian A."/>
            <person name="Lee N."/>
            <person name="Geraghty D.E."/>
        </authorList>
    </citation>
    <scope>SUBUNIT</scope>
    <scope>INTERACTION WITH HLA-F-B2M COMPLEX</scope>
</reference>
<reference key="25">
    <citation type="journal article" date="2010" name="PLoS Pathog.">
        <title>Mycobacterium tuberculosis peptides presented by HLA-E molecules are targets for human CD8 T-cells with cytotoxic as well as regulatory activity.</title>
        <authorList>
            <person name="Joosten S.A."/>
            <person name="van Meijgaarden K.E."/>
            <person name="van Weeren P.C."/>
            <person name="Kazi F."/>
            <person name="Geluk A."/>
            <person name="Savage N.D."/>
            <person name="Drijfhout J.W."/>
            <person name="Flower D.R."/>
            <person name="Hanekom W.A."/>
            <person name="Klein M.R."/>
            <person name="Ottenhoff T.H."/>
        </authorList>
    </citation>
    <scope>FUNCTION</scope>
</reference>
<reference key="26">
    <citation type="journal article" date="2011" name="BMC Syst. Biol.">
        <title>Initial characterization of the human central proteome.</title>
        <authorList>
            <person name="Burkard T.R."/>
            <person name="Planyavsky M."/>
            <person name="Kaupe I."/>
            <person name="Breitwieser F.P."/>
            <person name="Buerckstuemmer T."/>
            <person name="Bennett K.L."/>
            <person name="Superti-Furga G."/>
            <person name="Colinge J."/>
        </authorList>
    </citation>
    <scope>IDENTIFICATION BY MASS SPECTROMETRY [LARGE SCALE ANALYSIS]</scope>
</reference>
<reference key="27">
    <citation type="journal article" date="2013" name="J. Biol. Chem.">
        <title>Polymorphism in human cytomegalovirus UL40 impacts on recognition of human leukocyte antigen-E (HLA-E) by natural killer cells.</title>
        <authorList>
            <person name="Heatley S.L."/>
            <person name="Pietra G."/>
            <person name="Lin J."/>
            <person name="Widjaja J.M."/>
            <person name="Harpur C.M."/>
            <person name="Lester S."/>
            <person name="Rossjohn J."/>
            <person name="Szer J."/>
            <person name="Schwarer A."/>
            <person name="Bradstock K."/>
            <person name="Bardy P.G."/>
            <person name="Mingari M.C."/>
            <person name="Moretta L."/>
            <person name="Sullivan L.C."/>
            <person name="Brooks A.G."/>
        </authorList>
    </citation>
    <scope>FUNCTION (MICROBIAL INFECTION)</scope>
    <scope>SUBUNIT</scope>
    <scope>INTERACTION WITH KLRD1-KLRC2</scope>
</reference>
<reference key="28">
    <citation type="journal article" date="2018" name="Cell Rep.">
        <title>Distinct HLA-E Peptide Complexes Modify Antibody-Driven Effector Functions of Adaptive NK Cells.</title>
        <authorList>
            <person name="Roelle A."/>
            <person name="Meyer M."/>
            <person name="Calderazzo S."/>
            <person name="Jaeger D."/>
            <person name="Momburg F."/>
        </authorList>
    </citation>
    <scope>FUNCTION</scope>
</reference>
<reference key="29">
    <citation type="journal article" date="2020" name="Cells">
        <title>SARS-CoV-2 Spike 1 Protein Controls Natural Killer Cell Activation via the HLA-E/NKG2A Pathway.</title>
        <authorList>
            <person name="Bortolotti D."/>
            <person name="Gentili V."/>
            <person name="Rizzo S."/>
            <person name="Rotola A."/>
            <person name="Rizzo R."/>
        </authorList>
    </citation>
    <scope>FUNCTION (MICROBIAL INFECTION)</scope>
</reference>
<reference key="30">
    <citation type="journal article" date="2021" name="J. Clin. Invest.">
        <title>HLA-E-restricted HIV-1-specific CD8+ T cell responses in natural infection.</title>
        <authorList>
            <person name="Bansal A."/>
            <person name="Gehre M.N."/>
            <person name="Qin K."/>
            <person name="Sterrett S."/>
            <person name="Ali A."/>
            <person name="Dang Y."/>
            <person name="Abraham S."/>
            <person name="Costanzo M.C."/>
            <person name="Venegas L.A."/>
            <person name="Tang J."/>
            <person name="Manjunath N."/>
            <person name="Brockman M.A."/>
            <person name="Yang O.O."/>
            <person name="Kan-Mitchell J."/>
            <person name="Goepfert P.A."/>
        </authorList>
    </citation>
    <scope>FUNCTION</scope>
</reference>
<reference key="31">
    <citation type="journal article" date="2023" name="Nat. Immunol.">
        <title>HLA class I signal peptide polymorphism determines the level of CD94/NKG2-HLA-E-mediated regulation of effector cell responses.</title>
        <authorList>
            <person name="Lin Z."/>
            <person name="Bashirova A.A."/>
            <person name="Viard M."/>
            <person name="Garner L."/>
            <person name="Quastel M."/>
            <person name="Beiersdorfer M."/>
            <person name="Kasprzak W.K."/>
            <person name="Akdag M."/>
            <person name="Yuki Y."/>
            <person name="Ojeda P."/>
            <person name="Das S."/>
            <person name="Andresson T."/>
            <person name="Naranbhai V."/>
            <person name="Horowitz A."/>
            <person name="McMichael A.J."/>
            <person name="Hoelzemer A."/>
            <person name="Gillespie G.M."/>
            <person name="Garcia-Beltran W.F."/>
            <person name="Carrington M."/>
        </authorList>
    </citation>
    <scope>FUNCTION</scope>
    <scope>SUBCELLULAR LOCATION</scope>
    <scope>INDUCTION</scope>
</reference>
<reference key="32">
    <citation type="journal article" date="1998" name="Mol. Cell">
        <title>Structural features impose tight peptide binding specificity in the nonclassical MHC molecule HLA-E.</title>
        <authorList>
            <person name="O'Callaghan C.A."/>
            <person name="Tormo J."/>
            <person name="Willcox B.E."/>
            <person name="Braud V.M."/>
            <person name="Jakobsen B.K."/>
            <person name="Stuart D.I."/>
            <person name="McMichael A.J."/>
            <person name="Bell J.I."/>
            <person name="Jones E.Y."/>
        </authorList>
    </citation>
    <scope>X-RAY CRYSTALLOGRAPHY (2.85 ANGSTROMS) OF 22-295</scope>
    <scope>SUBUNIT</scope>
</reference>
<reference key="33">
    <citation type="journal article" date="2006" name="Nat. Immunol.">
        <title>Structural basis for a major histocompatibility complex class Ib-restricted T cell response.</title>
        <authorList>
            <person name="Hoare H.L."/>
            <person name="Sullivan L.C."/>
            <person name="Pietra G."/>
            <person name="Clements C.S."/>
            <person name="Lee E.J."/>
            <person name="Ely L.K."/>
            <person name="Beddoe T."/>
            <person name="Falco M."/>
            <person name="Kjer-Nielsen L."/>
            <person name="Reid H.H."/>
            <person name="McCluskey J."/>
            <person name="Moretta L."/>
            <person name="Rossjohn J."/>
            <person name="Brooks A.G."/>
        </authorList>
    </citation>
    <scope>X-RAY CRYSTALLOGRAPHY (2.1 ANGSTROMS) OF 23-297</scope>
    <scope>FUNCTION</scope>
    <scope>SUBUNIT</scope>
</reference>
<reference key="34">
    <citation type="journal article" date="2008" name="J. Mol. Biol.">
        <title>Subtle changes in peptide conformation profoundly affect recognition of the non-classical MHC class I molecule HLA-E by the CD94-NKG2 natural killer cell receptors.</title>
        <authorList>
            <person name="Hoare H.L."/>
            <person name="Sullivan L.C."/>
            <person name="Clements C.S."/>
            <person name="Ely L.K."/>
            <person name="Beddoe T."/>
            <person name="Henderson K.N."/>
            <person name="Lin J."/>
            <person name="Reid H.H."/>
            <person name="Brooks A.G."/>
            <person name="Rossjohn J."/>
        </authorList>
    </citation>
    <scope>X-RAY CRYSTALLOGRAPHY (2.50 ANGSTROMS) OF 22-297 IN COMPLEX WITH SELF-PEPTIDE</scope>
    <scope>DISULFIDE BOND</scope>
    <scope>FUNCTION</scope>
    <scope>SUBUNIT</scope>
</reference>
<reference key="35">
    <citation type="journal article" date="2018" name="Nat. Commun.">
        <title>Pathogen-derived HLA-E bound epitopes reveal broad primary anchor pocket tolerability and conformationally malleable peptide binding.</title>
        <authorList>
            <person name="Walters L.C."/>
            <person name="Harlos K."/>
            <person name="Brackenridge S."/>
            <person name="Rozbesky D."/>
            <person name="Barrett J.R."/>
            <person name="Jain V."/>
            <person name="Walter T.S."/>
            <person name="O'Callaghan C.A."/>
            <person name="Borrow P."/>
            <person name="Toebes M."/>
            <person name="Hansen S.G."/>
            <person name="Sacha J."/>
            <person name="Abdulhaqq S."/>
            <person name="Greene J.M."/>
            <person name="Frueh K."/>
            <person name="Marshall E."/>
            <person name="Picker L.J."/>
            <person name="Jones E.Y."/>
            <person name="McMichael A.J."/>
            <person name="Gillespie G.M."/>
        </authorList>
    </citation>
    <scope>X-RAY CRYSTALLOGRAPHY (2.60 ANGSTROMS) OF 22-295 IN COMPLEX WITH PATHOGEN-DERIVED PEPTIDE</scope>
    <scope>DISULFIDE BOND</scope>
    <scope>FUNCTION</scope>
    <scope>SUBUNIT</scope>
</reference>
<reference key="36">
    <citation type="journal article" date="2022" name="Cell Rep.">
        <title>Primary and secondary functions of HLA-E are determined by stability and conformation of the peptide-bound complexes.</title>
        <authorList>
            <person name="Walters L.C."/>
            <person name="Rozbesky D."/>
            <person name="Harlos K."/>
            <person name="Quastel M."/>
            <person name="Sun H."/>
            <person name="Springer S."/>
            <person name="Rambo R.P."/>
            <person name="Mohammed F."/>
            <person name="Jones E.Y."/>
            <person name="McMichael A.J."/>
            <person name="Gillespie G.M."/>
        </authorList>
    </citation>
    <scope>X-RAY CRYSTALLOGRAPHY (1.72 ANGSTROMS) OF 22-297 IN COMPLEX WITH PATHOGEN-DERIVED PEPTIDE</scope>
    <scope>DISULFIDE BOND</scope>
    <scope>FUNCTION</scope>
    <scope>SUBUNIT</scope>
</reference>
<reference key="37">
    <citation type="journal article" date="2002" name="Tissue Antigens">
        <title>Definitive high resolution typing of HLA-E allelic polymorphisms: identifying potential errors in existing allele data.</title>
        <authorList>
            <person name="Grimsley C."/>
            <person name="Kawasaki A."/>
            <person name="Gassner C."/>
            <person name="Sageshima N."/>
            <person name="Nose Y."/>
            <person name="Hatake K."/>
            <person name="Geraghty D.E."/>
            <person name="Ishitani A."/>
        </authorList>
    </citation>
    <scope>POLYMORPHISM</scope>
    <scope>QUESTIONING ON ALLELES E*01:02 AND E*01:04</scope>
</reference>
<reference key="38">
    <citation type="journal article" date="2012" name="Methods Mol. Biol.">
        <title>Molecular typing of HLA-E.</title>
        <authorList>
            <person name="Lauterbach N."/>
            <person name="Voorter C.E."/>
            <person name="Tilanus M.G."/>
        </authorList>
    </citation>
    <scope>POLYMORPHISM</scope>
    <scope>QUESTIONING ON ALLELES E*01:02 AND E*01:04</scope>
</reference>
<dbReference type="EMBL" id="M20022">
    <property type="protein sequence ID" value="AAA52655.1"/>
    <property type="molecule type" value="mRNA"/>
</dbReference>
<dbReference type="EMBL" id="AJ293263">
    <property type="protein sequence ID" value="CAC07212.1"/>
    <property type="molecule type" value="mRNA"/>
</dbReference>
<dbReference type="EMBL" id="AJ293264">
    <property type="protein sequence ID" value="CAC07213.1"/>
    <property type="molecule type" value="mRNA"/>
</dbReference>
<dbReference type="EMBL" id="M21533">
    <property type="protein sequence ID" value="AAA59835.1"/>
    <property type="molecule type" value="Genomic_DNA"/>
</dbReference>
<dbReference type="EMBL" id="M32508">
    <property type="protein sequence ID" value="AAA63225.1"/>
    <property type="molecule type" value="Genomic_DNA"/>
</dbReference>
<dbReference type="EMBL" id="AB103600">
    <property type="protein sequence ID" value="BAF31260.1"/>
    <property type="molecule type" value="Genomic_DNA"/>
</dbReference>
<dbReference type="EMBL" id="AF523274">
    <property type="protein sequence ID" value="AAM74969.1"/>
    <property type="molecule type" value="Genomic_DNA"/>
</dbReference>
<dbReference type="EMBL" id="AF523275">
    <property type="protein sequence ID" value="AAM74970.1"/>
    <property type="molecule type" value="Genomic_DNA"/>
</dbReference>
<dbReference type="EMBL" id="AF523276">
    <property type="protein sequence ID" value="AAM74971.1"/>
    <property type="molecule type" value="Genomic_DNA"/>
</dbReference>
<dbReference type="EMBL" id="AF523277">
    <property type="protein sequence ID" value="AAM74972.1"/>
    <property type="molecule type" value="Genomic_DNA"/>
</dbReference>
<dbReference type="EMBL" id="AF523278">
    <property type="protein sequence ID" value="AAM74973.1"/>
    <property type="molecule type" value="Genomic_DNA"/>
</dbReference>
<dbReference type="EMBL" id="AF523279">
    <property type="protein sequence ID" value="AAM74974.1"/>
    <property type="molecule type" value="Genomic_DNA"/>
</dbReference>
<dbReference type="EMBL" id="AF523280">
    <property type="protein sequence ID" value="AAM74975.1"/>
    <property type="molecule type" value="Genomic_DNA"/>
</dbReference>
<dbReference type="EMBL" id="AF523281">
    <property type="protein sequence ID" value="AAM74976.1"/>
    <property type="molecule type" value="Genomic_DNA"/>
</dbReference>
<dbReference type="EMBL" id="AF523282">
    <property type="protein sequence ID" value="AAM74977.1"/>
    <property type="molecule type" value="Genomic_DNA"/>
</dbReference>
<dbReference type="EMBL" id="AF523283">
    <property type="protein sequence ID" value="AAM74978.1"/>
    <property type="molecule type" value="Genomic_DNA"/>
</dbReference>
<dbReference type="EMBL" id="AY645727">
    <property type="protein sequence ID" value="AAT73210.1"/>
    <property type="molecule type" value="Genomic_DNA"/>
</dbReference>
<dbReference type="EMBL" id="AY645731">
    <property type="protein sequence ID" value="AAT73214.1"/>
    <property type="molecule type" value="Genomic_DNA"/>
</dbReference>
<dbReference type="EMBL" id="AY645733">
    <property type="protein sequence ID" value="AAT73216.1"/>
    <property type="molecule type" value="Genomic_DNA"/>
</dbReference>
<dbReference type="EMBL" id="AY645736">
    <property type="protein sequence ID" value="AAT73219.1"/>
    <property type="molecule type" value="Genomic_DNA"/>
</dbReference>
<dbReference type="EMBL" id="AY645737">
    <property type="protein sequence ID" value="AAT73220.1"/>
    <property type="molecule type" value="Genomic_DNA"/>
</dbReference>
<dbReference type="EMBL" id="AY645738">
    <property type="protein sequence ID" value="AAT73221.1"/>
    <property type="molecule type" value="Genomic_DNA"/>
</dbReference>
<dbReference type="EMBL" id="AY645740">
    <property type="protein sequence ID" value="AAT73223.1"/>
    <property type="molecule type" value="Genomic_DNA"/>
</dbReference>
<dbReference type="EMBL" id="AY645741">
    <property type="protein sequence ID" value="AAT73224.1"/>
    <property type="molecule type" value="Genomic_DNA"/>
</dbReference>
<dbReference type="EMBL" id="LM654512">
    <property type="protein sequence ID" value="CDX10595.1"/>
    <property type="molecule type" value="Genomic_DNA"/>
</dbReference>
<dbReference type="EMBL" id="LT618796">
    <property type="protein sequence ID" value="SCQ83612.1"/>
    <property type="molecule type" value="Genomic_DNA"/>
</dbReference>
<dbReference type="EMBL" id="AY221103">
    <property type="protein sequence ID" value="AAO34408.1"/>
    <property type="molecule type" value="mRNA"/>
</dbReference>
<dbReference type="EMBL" id="AY216681">
    <property type="protein sequence ID" value="AAO37688.1"/>
    <property type="molecule type" value="mRNA"/>
</dbReference>
<dbReference type="EMBL" id="KX709624">
    <property type="protein sequence ID" value="ASU09661.1"/>
    <property type="molecule type" value="Genomic_DNA"/>
</dbReference>
<dbReference type="EMBL" id="HM231277">
    <property type="protein sequence ID" value="ADN38247.1"/>
    <property type="molecule type" value="Genomic_DNA"/>
</dbReference>
<dbReference type="EMBL" id="BA000025">
    <property type="protein sequence ID" value="BAB63328.1"/>
    <property type="molecule type" value="Genomic_DNA"/>
</dbReference>
<dbReference type="EMBL" id="BC002578">
    <property type="protein sequence ID" value="AAH02578.1"/>
    <property type="molecule type" value="mRNA"/>
</dbReference>
<dbReference type="EMBL" id="BC040479">
    <property type="protein sequence ID" value="AAH40479.1"/>
    <property type="molecule type" value="mRNA"/>
</dbReference>
<dbReference type="EMBL" id="BC004297">
    <property type="protein sequence ID" value="AAH04297.1"/>
    <property type="molecule type" value="mRNA"/>
</dbReference>
<dbReference type="EMBL" id="AL662873">
    <property type="status" value="NOT_ANNOTATED_CDS"/>
    <property type="molecule type" value="Genomic_DNA"/>
</dbReference>
<dbReference type="CCDS" id="CCDS34379.1"/>
<dbReference type="PIR" id="A28834">
    <property type="entry name" value="A28834"/>
</dbReference>
<dbReference type="RefSeq" id="NP_005507.3">
    <property type="nucleotide sequence ID" value="NM_005516.5"/>
</dbReference>
<dbReference type="PDB" id="1KPR">
    <property type="method" value="X-ray"/>
    <property type="resolution" value="2.80 A"/>
    <property type="chains" value="A/C=22-295"/>
</dbReference>
<dbReference type="PDB" id="1KTL">
    <property type="method" value="X-ray"/>
    <property type="resolution" value="3.10 A"/>
    <property type="chains" value="A/C=22-295"/>
</dbReference>
<dbReference type="PDB" id="1MHE">
    <property type="method" value="X-ray"/>
    <property type="resolution" value="2.85 A"/>
    <property type="chains" value="A/C=22-295"/>
</dbReference>
<dbReference type="PDB" id="2ESV">
    <property type="method" value="X-ray"/>
    <property type="resolution" value="2.60 A"/>
    <property type="chains" value="A=23-297"/>
</dbReference>
<dbReference type="PDB" id="3AM8">
    <property type="method" value="X-ray"/>
    <property type="resolution" value="2.80 A"/>
    <property type="chains" value="A/B=22-297"/>
</dbReference>
<dbReference type="PDB" id="3BZE">
    <property type="method" value="X-ray"/>
    <property type="resolution" value="2.50 A"/>
    <property type="chains" value="A/C/E/G=23-295"/>
</dbReference>
<dbReference type="PDB" id="3BZF">
    <property type="method" value="X-ray"/>
    <property type="resolution" value="2.50 A"/>
    <property type="chains" value="A/C=22-297"/>
</dbReference>
<dbReference type="PDB" id="3CDG">
    <property type="method" value="X-ray"/>
    <property type="resolution" value="3.40 A"/>
    <property type="chains" value="A/C=23-295"/>
</dbReference>
<dbReference type="PDB" id="3CII">
    <property type="method" value="X-ray"/>
    <property type="resolution" value="4.41 A"/>
    <property type="chains" value="A/D=23-295"/>
</dbReference>
<dbReference type="PDB" id="5W1V">
    <property type="method" value="X-ray"/>
    <property type="resolution" value="3.31 A"/>
    <property type="chains" value="A/F/K/P=22-299"/>
</dbReference>
<dbReference type="PDB" id="5W1W">
    <property type="method" value="X-ray"/>
    <property type="resolution" value="3.10 A"/>
    <property type="chains" value="A/F/K/P=22-299"/>
</dbReference>
<dbReference type="PDB" id="6GGM">
    <property type="method" value="X-ray"/>
    <property type="resolution" value="2.73 A"/>
    <property type="chains" value="A/C=22-295"/>
</dbReference>
<dbReference type="PDB" id="6GH1">
    <property type="method" value="X-ray"/>
    <property type="resolution" value="2.10 A"/>
    <property type="chains" value="A/C/E/G=22-295"/>
</dbReference>
<dbReference type="PDB" id="6GH4">
    <property type="method" value="X-ray"/>
    <property type="resolution" value="2.16 A"/>
    <property type="chains" value="A/C/E/G=22-295"/>
</dbReference>
<dbReference type="PDB" id="6GHN">
    <property type="method" value="X-ray"/>
    <property type="resolution" value="2.54 A"/>
    <property type="chains" value="A/C=22-295"/>
</dbReference>
<dbReference type="PDB" id="6GL1">
    <property type="method" value="X-ray"/>
    <property type="resolution" value="2.62 A"/>
    <property type="chains" value="A/C/E/G=22-295"/>
</dbReference>
<dbReference type="PDB" id="6ZKW">
    <property type="method" value="X-ray"/>
    <property type="resolution" value="2.26 A"/>
    <property type="chains" value="A=22-297"/>
</dbReference>
<dbReference type="PDB" id="6ZKX">
    <property type="method" value="X-ray"/>
    <property type="resolution" value="2.17 A"/>
    <property type="chains" value="A=22-297"/>
</dbReference>
<dbReference type="PDB" id="6ZKY">
    <property type="method" value="X-ray"/>
    <property type="resolution" value="2.65 A"/>
    <property type="chains" value="A=22-297"/>
</dbReference>
<dbReference type="PDB" id="6ZKZ">
    <property type="method" value="X-ray"/>
    <property type="resolution" value="2.30 A"/>
    <property type="chains" value="A=22-297"/>
</dbReference>
<dbReference type="PDB" id="7BH8">
    <property type="method" value="X-ray"/>
    <property type="resolution" value="1.80 A"/>
    <property type="chains" value="A/C=22-297"/>
</dbReference>
<dbReference type="PDB" id="7NDQ">
    <property type="method" value="X-ray"/>
    <property type="resolution" value="2.55 A"/>
    <property type="chains" value="AAA=22-297"/>
</dbReference>
<dbReference type="PDB" id="7NDT">
    <property type="method" value="X-ray"/>
    <property type="resolution" value="3.00 A"/>
    <property type="chains" value="AAA/FFF=22-297"/>
</dbReference>
<dbReference type="PDB" id="7NDU">
    <property type="method" value="X-ray"/>
    <property type="resolution" value="2.90 A"/>
    <property type="chains" value="AAA=22-297"/>
</dbReference>
<dbReference type="PDB" id="7P49">
    <property type="method" value="X-ray"/>
    <property type="resolution" value="2.05 A"/>
    <property type="chains" value="A/C/E/G=22-297"/>
</dbReference>
<dbReference type="PDB" id="7P4B">
    <property type="method" value="X-ray"/>
    <property type="resolution" value="1.72 A"/>
    <property type="chains" value="A/C/E/G=22-297"/>
</dbReference>
<dbReference type="PDB" id="8QFY">
    <property type="method" value="X-ray"/>
    <property type="resolution" value="2.33 A"/>
    <property type="chains" value="AAA/FFF=22-297"/>
</dbReference>
<dbReference type="PDB" id="8RLT">
    <property type="method" value="X-ray"/>
    <property type="resolution" value="2.25 A"/>
    <property type="chains" value="A/F=22-297"/>
</dbReference>
<dbReference type="PDB" id="8RLU">
    <property type="method" value="X-ray"/>
    <property type="resolution" value="2.35 A"/>
    <property type="chains" value="A/F=22-297"/>
</dbReference>
<dbReference type="PDB" id="8RLV">
    <property type="method" value="X-ray"/>
    <property type="resolution" value="2.61 A"/>
    <property type="chains" value="A/F=22-297"/>
</dbReference>
<dbReference type="PDBsum" id="1KPR"/>
<dbReference type="PDBsum" id="1KTL"/>
<dbReference type="PDBsum" id="1MHE"/>
<dbReference type="PDBsum" id="2ESV"/>
<dbReference type="PDBsum" id="3AM8"/>
<dbReference type="PDBsum" id="3BZE"/>
<dbReference type="PDBsum" id="3BZF"/>
<dbReference type="PDBsum" id="3CDG"/>
<dbReference type="PDBsum" id="3CII"/>
<dbReference type="PDBsum" id="5W1V"/>
<dbReference type="PDBsum" id="5W1W"/>
<dbReference type="PDBsum" id="6GGM"/>
<dbReference type="PDBsum" id="6GH1"/>
<dbReference type="PDBsum" id="6GH4"/>
<dbReference type="PDBsum" id="6GHN"/>
<dbReference type="PDBsum" id="6GL1"/>
<dbReference type="PDBsum" id="6ZKW"/>
<dbReference type="PDBsum" id="6ZKX"/>
<dbReference type="PDBsum" id="6ZKY"/>
<dbReference type="PDBsum" id="6ZKZ"/>
<dbReference type="PDBsum" id="7BH8"/>
<dbReference type="PDBsum" id="7NDQ"/>
<dbReference type="PDBsum" id="7NDT"/>
<dbReference type="PDBsum" id="7NDU"/>
<dbReference type="PDBsum" id="7P49"/>
<dbReference type="PDBsum" id="7P4B"/>
<dbReference type="PDBsum" id="8QFY"/>
<dbReference type="PDBsum" id="8RLT"/>
<dbReference type="PDBsum" id="8RLU"/>
<dbReference type="PDBsum" id="8RLV"/>
<dbReference type="SMR" id="P13747"/>
<dbReference type="BioGRID" id="109378">
    <property type="interactions" value="113"/>
</dbReference>
<dbReference type="DIP" id="DIP-32N"/>
<dbReference type="FunCoup" id="P13747">
    <property type="interactions" value="700"/>
</dbReference>
<dbReference type="IntAct" id="P13747">
    <property type="interactions" value="76"/>
</dbReference>
<dbReference type="MINT" id="P13747"/>
<dbReference type="STRING" id="9606.ENSP00000365817"/>
<dbReference type="TCDB" id="9.A.75.1.3">
    <property type="family name" value="the mhc ii receptor (mhc2r) family"/>
</dbReference>
<dbReference type="GlyConnect" id="1330">
    <property type="glycosylation" value="1 N-Linked glycan (1 site)"/>
</dbReference>
<dbReference type="GlyCosmos" id="P13747">
    <property type="glycosylation" value="1 site, 1 glycan"/>
</dbReference>
<dbReference type="GlyGen" id="P13747">
    <property type="glycosylation" value="3 sites, 7 N-linked glycans (1 site), 2 O-linked glycans (1 site)"/>
</dbReference>
<dbReference type="iPTMnet" id="P13747"/>
<dbReference type="PhosphoSitePlus" id="P13747"/>
<dbReference type="SwissPalm" id="P13747"/>
<dbReference type="BioMuta" id="HLA-E"/>
<dbReference type="DMDM" id="34395942"/>
<dbReference type="jPOST" id="P13747"/>
<dbReference type="MassIVE" id="P13747"/>
<dbReference type="PaxDb" id="9606-ENSP00000365817"/>
<dbReference type="PeptideAtlas" id="P13747"/>
<dbReference type="ProteomicsDB" id="52981"/>
<dbReference type="ProteomicsDB" id="66256"/>
<dbReference type="Pumba" id="P13747"/>
<dbReference type="TopDownProteomics" id="P13747"/>
<dbReference type="Antibodypedia" id="26293">
    <property type="antibodies" value="883 antibodies from 31 providers"/>
</dbReference>
<dbReference type="CPTC" id="P13747">
    <property type="antibodies" value="1 antibody"/>
</dbReference>
<dbReference type="DNASU" id="3133"/>
<dbReference type="Ensembl" id="ENST00000376630.5">
    <property type="protein sequence ID" value="ENSP00000365817.4"/>
    <property type="gene ID" value="ENSG00000204592.9"/>
</dbReference>
<dbReference type="Ensembl" id="ENST00000383597.6">
    <property type="protein sequence ID" value="ENSP00000373091.4"/>
    <property type="gene ID" value="ENSG00000206493.7"/>
</dbReference>
<dbReference type="Ensembl" id="ENST00000415289.4">
    <property type="protein sequence ID" value="ENSP00000409910.2"/>
    <property type="gene ID" value="ENSG00000229252.6"/>
</dbReference>
<dbReference type="Ensembl" id="ENST00000415649.4">
    <property type="protein sequence ID" value="ENSP00000390707.2"/>
    <property type="gene ID" value="ENSG00000233904.6"/>
</dbReference>
<dbReference type="Ensembl" id="ENST00000425603.4">
    <property type="protein sequence ID" value="ENSP00000402694.2"/>
    <property type="gene ID" value="ENSG00000236632.5"/>
</dbReference>
<dbReference type="Ensembl" id="ENST00000427936.4">
    <property type="protein sequence ID" value="ENSP00000397420.2"/>
    <property type="gene ID" value="ENSG00000230254.7"/>
</dbReference>
<dbReference type="Ensembl" id="ENST00000444683.4">
    <property type="protein sequence ID" value="ENSP00000400458.2"/>
    <property type="gene ID" value="ENSG00000225201.6"/>
</dbReference>
<dbReference type="GeneID" id="3133"/>
<dbReference type="KEGG" id="hsa:3133"/>
<dbReference type="MANE-Select" id="ENST00000376630.5">
    <property type="protein sequence ID" value="ENSP00000365817.4"/>
    <property type="RefSeq nucleotide sequence ID" value="NM_005516.6"/>
    <property type="RefSeq protein sequence ID" value="NP_005507.3"/>
</dbReference>
<dbReference type="UCSC" id="uc003nqg.4">
    <property type="organism name" value="human"/>
</dbReference>
<dbReference type="AGR" id="HGNC:4962"/>
<dbReference type="CTD" id="3133"/>
<dbReference type="DisGeNET" id="3133"/>
<dbReference type="GeneCards" id="HLA-E"/>
<dbReference type="HGNC" id="HGNC:4962">
    <property type="gene designation" value="HLA-E"/>
</dbReference>
<dbReference type="HPA" id="ENSG00000204592">
    <property type="expression patterns" value="Low tissue specificity"/>
</dbReference>
<dbReference type="MIM" id="143010">
    <property type="type" value="gene"/>
</dbReference>
<dbReference type="neXtProt" id="NX_P13747"/>
<dbReference type="OpenTargets" id="ENSG00000204592"/>
<dbReference type="PharmGKB" id="PA35081"/>
<dbReference type="VEuPathDB" id="HostDB:ENSG00000204592"/>
<dbReference type="eggNOG" id="ENOG502RQEK">
    <property type="taxonomic scope" value="Eukaryota"/>
</dbReference>
<dbReference type="GeneTree" id="ENSGT01120000271826"/>
<dbReference type="HOGENOM" id="CLU_047501_1_1_1"/>
<dbReference type="InParanoid" id="P13747"/>
<dbReference type="OMA" id="CVEWLHT"/>
<dbReference type="OrthoDB" id="8936120at2759"/>
<dbReference type="PAN-GO" id="P13747">
    <property type="GO annotations" value="8 GO annotations based on evolutionary models"/>
</dbReference>
<dbReference type="PhylomeDB" id="P13747"/>
<dbReference type="TreeFam" id="TF336617"/>
<dbReference type="PathwayCommons" id="P13747"/>
<dbReference type="Reactome" id="R-HSA-1236974">
    <property type="pathway name" value="ER-Phagosome pathway"/>
</dbReference>
<dbReference type="Reactome" id="R-HSA-1236977">
    <property type="pathway name" value="Endosomal/Vacuolar pathway"/>
</dbReference>
<dbReference type="Reactome" id="R-HSA-198933">
    <property type="pathway name" value="Immunoregulatory interactions between a Lymphoid and a non-Lymphoid cell"/>
</dbReference>
<dbReference type="Reactome" id="R-HSA-2172127">
    <property type="pathway name" value="DAP12 interactions"/>
</dbReference>
<dbReference type="Reactome" id="R-HSA-2424491">
    <property type="pathway name" value="DAP12 signaling"/>
</dbReference>
<dbReference type="Reactome" id="R-HSA-877300">
    <property type="pathway name" value="Interferon gamma signaling"/>
</dbReference>
<dbReference type="Reactome" id="R-HSA-909733">
    <property type="pathway name" value="Interferon alpha/beta signaling"/>
</dbReference>
<dbReference type="Reactome" id="R-HSA-9705671">
    <property type="pathway name" value="SARS-CoV-2 activates/modulates innate and adaptive immune responses"/>
</dbReference>
<dbReference type="Reactome" id="R-HSA-983170">
    <property type="pathway name" value="Antigen Presentation: Folding, assembly and peptide loading of class I MHC"/>
</dbReference>
<dbReference type="SignaLink" id="P13747"/>
<dbReference type="SIGNOR" id="P13747"/>
<dbReference type="BioGRID-ORCS" id="3133">
    <property type="hits" value="15 hits in 1148 CRISPR screens"/>
</dbReference>
<dbReference type="ChiTaRS" id="HLA-E">
    <property type="organism name" value="human"/>
</dbReference>
<dbReference type="EvolutionaryTrace" id="P13747"/>
<dbReference type="GeneWiki" id="HLA-E"/>
<dbReference type="GenomeRNAi" id="3133"/>
<dbReference type="Pharos" id="P13747">
    <property type="development level" value="Tbio"/>
</dbReference>
<dbReference type="PRO" id="PR:P13747"/>
<dbReference type="Proteomes" id="UP000005640">
    <property type="component" value="Chromosome 6"/>
</dbReference>
<dbReference type="RNAct" id="P13747">
    <property type="molecule type" value="protein"/>
</dbReference>
<dbReference type="Bgee" id="ENSG00000204592">
    <property type="expression patterns" value="Expressed in blood and 99 other cell types or tissues"/>
</dbReference>
<dbReference type="ExpressionAtlas" id="P13747">
    <property type="expression patterns" value="baseline and differential"/>
</dbReference>
<dbReference type="GO" id="GO:0009986">
    <property type="term" value="C:cell surface"/>
    <property type="evidence" value="ECO:0000314"/>
    <property type="project" value="UniProtKB"/>
</dbReference>
<dbReference type="GO" id="GO:0031901">
    <property type="term" value="C:early endosome membrane"/>
    <property type="evidence" value="ECO:0000304"/>
    <property type="project" value="Reactome"/>
</dbReference>
<dbReference type="GO" id="GO:0012507">
    <property type="term" value="C:ER to Golgi transport vesicle membrane"/>
    <property type="evidence" value="ECO:0000304"/>
    <property type="project" value="Reactome"/>
</dbReference>
<dbReference type="GO" id="GO:0009897">
    <property type="term" value="C:external side of plasma membrane"/>
    <property type="evidence" value="ECO:0000318"/>
    <property type="project" value="GO_Central"/>
</dbReference>
<dbReference type="GO" id="GO:0070062">
    <property type="term" value="C:extracellular exosome"/>
    <property type="evidence" value="ECO:0007005"/>
    <property type="project" value="UniProtKB"/>
</dbReference>
<dbReference type="GO" id="GO:0005615">
    <property type="term" value="C:extracellular space"/>
    <property type="evidence" value="ECO:0000314"/>
    <property type="project" value="UniProt"/>
</dbReference>
<dbReference type="GO" id="GO:0000139">
    <property type="term" value="C:Golgi membrane"/>
    <property type="evidence" value="ECO:0000304"/>
    <property type="project" value="Reactome"/>
</dbReference>
<dbReference type="GO" id="GO:0098553">
    <property type="term" value="C:lumenal side of endoplasmic reticulum membrane"/>
    <property type="evidence" value="ECO:0000304"/>
    <property type="project" value="Reactome"/>
</dbReference>
<dbReference type="GO" id="GO:0042612">
    <property type="term" value="C:MHC class I protein complex"/>
    <property type="evidence" value="ECO:0000314"/>
    <property type="project" value="UniProtKB"/>
</dbReference>
<dbReference type="GO" id="GO:0032398">
    <property type="term" value="C:MHC class Ib protein complex"/>
    <property type="evidence" value="ECO:0000314"/>
    <property type="project" value="UniProtKB"/>
</dbReference>
<dbReference type="GO" id="GO:0030670">
    <property type="term" value="C:phagocytic vesicle membrane"/>
    <property type="evidence" value="ECO:0000304"/>
    <property type="project" value="Reactome"/>
</dbReference>
<dbReference type="GO" id="GO:0005886">
    <property type="term" value="C:plasma membrane"/>
    <property type="evidence" value="ECO:0000314"/>
    <property type="project" value="UniProtKB"/>
</dbReference>
<dbReference type="GO" id="GO:0055038">
    <property type="term" value="C:recycling endosome membrane"/>
    <property type="evidence" value="ECO:0000304"/>
    <property type="project" value="Reactome"/>
</dbReference>
<dbReference type="GO" id="GO:0030881">
    <property type="term" value="F:beta-2-microglobulin binding"/>
    <property type="evidence" value="ECO:0000314"/>
    <property type="project" value="UniProtKB"/>
</dbReference>
<dbReference type="GO" id="GO:0042288">
    <property type="term" value="F:MHC class I protein binding"/>
    <property type="evidence" value="ECO:0000314"/>
    <property type="project" value="UniProtKB"/>
</dbReference>
<dbReference type="GO" id="GO:0046703">
    <property type="term" value="F:natural killer cell lectin-like receptor binding"/>
    <property type="evidence" value="ECO:0000353"/>
    <property type="project" value="UniProtKB"/>
</dbReference>
<dbReference type="GO" id="GO:0042605">
    <property type="term" value="F:peptide antigen binding"/>
    <property type="evidence" value="ECO:0000314"/>
    <property type="project" value="UniProtKB"/>
</dbReference>
<dbReference type="GO" id="GO:0048018">
    <property type="term" value="F:receptor ligand activity"/>
    <property type="evidence" value="ECO:0000314"/>
    <property type="project" value="UniProt"/>
</dbReference>
<dbReference type="GO" id="GO:0005102">
    <property type="term" value="F:signaling receptor binding"/>
    <property type="evidence" value="ECO:0000353"/>
    <property type="project" value="UniProtKB"/>
</dbReference>
<dbReference type="GO" id="GO:0042608">
    <property type="term" value="F:T cell receptor binding"/>
    <property type="evidence" value="ECO:0000314"/>
    <property type="project" value="UniProtKB"/>
</dbReference>
<dbReference type="GO" id="GO:0002250">
    <property type="term" value="P:adaptive immune response"/>
    <property type="evidence" value="ECO:0000314"/>
    <property type="project" value="UniProtKB"/>
</dbReference>
<dbReference type="GO" id="GO:0019731">
    <property type="term" value="P:antibacterial humoral response"/>
    <property type="evidence" value="ECO:0000314"/>
    <property type="project" value="UniProtKB"/>
</dbReference>
<dbReference type="GO" id="GO:0002486">
    <property type="term" value="P:antigen processing and presentation of endogenous peptide antigen via MHC class I via ER pathway, TAP-independent"/>
    <property type="evidence" value="ECO:0000318"/>
    <property type="project" value="GO_Central"/>
</dbReference>
<dbReference type="GO" id="GO:0002476">
    <property type="term" value="P:antigen processing and presentation of endogenous peptide antigen via MHC class Ib"/>
    <property type="evidence" value="ECO:0000314"/>
    <property type="project" value="UniProtKB"/>
</dbReference>
<dbReference type="GO" id="GO:0002477">
    <property type="term" value="P:antigen processing and presentation of exogenous peptide antigen via MHC class Ib"/>
    <property type="evidence" value="ECO:0000314"/>
    <property type="project" value="UniProtKB"/>
</dbReference>
<dbReference type="GO" id="GO:0036037">
    <property type="term" value="P:CD8-positive, alpha-beta T cell activation"/>
    <property type="evidence" value="ECO:0000314"/>
    <property type="project" value="UniProtKB"/>
</dbReference>
<dbReference type="GO" id="GO:0050830">
    <property type="term" value="P:defense response to Gram-positive bacterium"/>
    <property type="evidence" value="ECO:0000314"/>
    <property type="project" value="UniProtKB"/>
</dbReference>
<dbReference type="GO" id="GO:0006955">
    <property type="term" value="P:immune response"/>
    <property type="evidence" value="ECO:0000318"/>
    <property type="project" value="GO_Central"/>
</dbReference>
<dbReference type="GO" id="GO:0045087">
    <property type="term" value="P:innate immune response"/>
    <property type="evidence" value="ECO:0007669"/>
    <property type="project" value="UniProtKB-KW"/>
</dbReference>
<dbReference type="GO" id="GO:0002519">
    <property type="term" value="P:natural killer cell tolerance induction"/>
    <property type="evidence" value="ECO:0000314"/>
    <property type="project" value="UniProtKB"/>
</dbReference>
<dbReference type="GO" id="GO:0032815">
    <property type="term" value="P:negative regulation of natural killer cell activation"/>
    <property type="evidence" value="ECO:0000314"/>
    <property type="project" value="UniProtKB"/>
</dbReference>
<dbReference type="GO" id="GO:0045953">
    <property type="term" value="P:negative regulation of natural killer cell mediated cytotoxicity"/>
    <property type="evidence" value="ECO:0000314"/>
    <property type="project" value="UniProtKB"/>
</dbReference>
<dbReference type="GO" id="GO:0042130">
    <property type="term" value="P:negative regulation of T cell proliferation"/>
    <property type="evidence" value="ECO:0000314"/>
    <property type="project" value="UniProtKB"/>
</dbReference>
<dbReference type="GO" id="GO:0001815">
    <property type="term" value="P:positive regulation of antibody-dependent cellular cytotoxicity"/>
    <property type="evidence" value="ECO:0000314"/>
    <property type="project" value="UniProtKB"/>
</dbReference>
<dbReference type="GO" id="GO:2001187">
    <property type="term" value="P:positive regulation of CD8-positive, alpha-beta T cell activation"/>
    <property type="evidence" value="ECO:0000314"/>
    <property type="project" value="UniProtKB"/>
</dbReference>
<dbReference type="GO" id="GO:2000566">
    <property type="term" value="P:positive regulation of CD8-positive, alpha-beta T cell proliferation"/>
    <property type="evidence" value="ECO:0000314"/>
    <property type="project" value="UniProtKB"/>
</dbReference>
<dbReference type="GO" id="GO:0002639">
    <property type="term" value="P:positive regulation of immunoglobulin production"/>
    <property type="evidence" value="ECO:0000314"/>
    <property type="project" value="UniProtKB"/>
</dbReference>
<dbReference type="GO" id="GO:0032736">
    <property type="term" value="P:positive regulation of interleukin-13 production"/>
    <property type="evidence" value="ECO:0000314"/>
    <property type="project" value="UniProtKB"/>
</dbReference>
<dbReference type="GO" id="GO:0032753">
    <property type="term" value="P:positive regulation of interleukin-4 production"/>
    <property type="evidence" value="ECO:0000314"/>
    <property type="project" value="UniProtKB"/>
</dbReference>
<dbReference type="GO" id="GO:0032816">
    <property type="term" value="P:positive regulation of natural killer cell activation"/>
    <property type="evidence" value="ECO:0000314"/>
    <property type="project" value="UniProtKB"/>
</dbReference>
<dbReference type="GO" id="GO:0002729">
    <property type="term" value="P:positive regulation of natural killer cell cytokine production"/>
    <property type="evidence" value="ECO:0000314"/>
    <property type="project" value="UniProtKB"/>
</dbReference>
<dbReference type="GO" id="GO:0045954">
    <property type="term" value="P:positive regulation of natural killer cell mediated cytotoxicity"/>
    <property type="evidence" value="ECO:0000314"/>
    <property type="project" value="UniProtKB"/>
</dbReference>
<dbReference type="GO" id="GO:0002717">
    <property type="term" value="P:positive regulation of natural killer cell mediated immunity"/>
    <property type="evidence" value="ECO:0000314"/>
    <property type="project" value="UniProtKB"/>
</dbReference>
<dbReference type="GO" id="GO:0032819">
    <property type="term" value="P:positive regulation of natural killer cell proliferation"/>
    <property type="evidence" value="ECO:0000314"/>
    <property type="project" value="UniProtKB"/>
</dbReference>
<dbReference type="GO" id="GO:0001916">
    <property type="term" value="P:positive regulation of T cell mediated cytotoxicity"/>
    <property type="evidence" value="ECO:0000314"/>
    <property type="project" value="UniProtKB"/>
</dbReference>
<dbReference type="GO" id="GO:0032759">
    <property type="term" value="P:positive regulation of TRAIL production"/>
    <property type="evidence" value="ECO:0000314"/>
    <property type="project" value="UniProtKB"/>
</dbReference>
<dbReference type="GO" id="GO:0032760">
    <property type="term" value="P:positive regulation of tumor necrosis factor production"/>
    <property type="evidence" value="ECO:0000314"/>
    <property type="project" value="UniProtKB"/>
</dbReference>
<dbReference type="GO" id="GO:0042270">
    <property type="term" value="P:protection from natural killer cell mediated cytotoxicity"/>
    <property type="evidence" value="ECO:0000314"/>
    <property type="project" value="UniProtKB"/>
</dbReference>
<dbReference type="GO" id="GO:0002715">
    <property type="term" value="P:regulation of natural killer cell mediated immunity"/>
    <property type="evidence" value="ECO:0000314"/>
    <property type="project" value="UniProtKB"/>
</dbReference>
<dbReference type="CDD" id="cd21024">
    <property type="entry name" value="IgC1_MHC_Ib_HLA-E"/>
    <property type="match status" value="1"/>
</dbReference>
<dbReference type="FunFam" id="2.60.40.10:FF:000014">
    <property type="entry name" value="H-2 class I histocompatibility antigen, alpha chain"/>
    <property type="match status" value="1"/>
</dbReference>
<dbReference type="FunFam" id="3.30.500.10:FF:000001">
    <property type="entry name" value="H-2 class I histocompatibility antigen, alpha chain"/>
    <property type="match status" value="1"/>
</dbReference>
<dbReference type="Gene3D" id="2.60.40.10">
    <property type="entry name" value="Immunoglobulins"/>
    <property type="match status" value="1"/>
</dbReference>
<dbReference type="Gene3D" id="3.30.500.10">
    <property type="entry name" value="MHC class I-like antigen recognition-like"/>
    <property type="match status" value="1"/>
</dbReference>
<dbReference type="InterPro" id="IPR007110">
    <property type="entry name" value="Ig-like_dom"/>
</dbReference>
<dbReference type="InterPro" id="IPR036179">
    <property type="entry name" value="Ig-like_dom_sf"/>
</dbReference>
<dbReference type="InterPro" id="IPR013783">
    <property type="entry name" value="Ig-like_fold"/>
</dbReference>
<dbReference type="InterPro" id="IPR003006">
    <property type="entry name" value="Ig/MHC_CS"/>
</dbReference>
<dbReference type="InterPro" id="IPR003597">
    <property type="entry name" value="Ig_C1-set"/>
</dbReference>
<dbReference type="InterPro" id="IPR050208">
    <property type="entry name" value="MHC_class-I_related"/>
</dbReference>
<dbReference type="InterPro" id="IPR011161">
    <property type="entry name" value="MHC_I-like_Ag-recog"/>
</dbReference>
<dbReference type="InterPro" id="IPR037055">
    <property type="entry name" value="MHC_I-like_Ag-recog_sf"/>
</dbReference>
<dbReference type="InterPro" id="IPR011162">
    <property type="entry name" value="MHC_I/II-like_Ag-recog"/>
</dbReference>
<dbReference type="InterPro" id="IPR001039">
    <property type="entry name" value="MHC_I_a_a1/a2"/>
</dbReference>
<dbReference type="InterPro" id="IPR010579">
    <property type="entry name" value="MHC_I_a_C"/>
</dbReference>
<dbReference type="PANTHER" id="PTHR16675:SF164">
    <property type="entry name" value="HLA CLASS I HISTOCOMPATIBILITY ANTIGEN, ALPHA CHAIN E"/>
    <property type="match status" value="1"/>
</dbReference>
<dbReference type="PANTHER" id="PTHR16675">
    <property type="entry name" value="MHC CLASS I-RELATED"/>
    <property type="match status" value="1"/>
</dbReference>
<dbReference type="Pfam" id="PF07654">
    <property type="entry name" value="C1-set"/>
    <property type="match status" value="1"/>
</dbReference>
<dbReference type="Pfam" id="PF00129">
    <property type="entry name" value="MHC_I"/>
    <property type="match status" value="1"/>
</dbReference>
<dbReference type="Pfam" id="PF06623">
    <property type="entry name" value="MHC_I_C"/>
    <property type="match status" value="1"/>
</dbReference>
<dbReference type="PRINTS" id="PR01638">
    <property type="entry name" value="MHCCLASSI"/>
</dbReference>
<dbReference type="SMART" id="SM00407">
    <property type="entry name" value="IGc1"/>
    <property type="match status" value="1"/>
</dbReference>
<dbReference type="SUPFAM" id="SSF48726">
    <property type="entry name" value="Immunoglobulin"/>
    <property type="match status" value="1"/>
</dbReference>
<dbReference type="SUPFAM" id="SSF54452">
    <property type="entry name" value="MHC antigen-recognition domain"/>
    <property type="match status" value="1"/>
</dbReference>
<dbReference type="PROSITE" id="PS50835">
    <property type="entry name" value="IG_LIKE"/>
    <property type="match status" value="1"/>
</dbReference>
<dbReference type="PROSITE" id="PS00290">
    <property type="entry name" value="IG_MHC"/>
    <property type="match status" value="1"/>
</dbReference>
<gene>
    <name evidence="36 38" type="primary">HLA-E</name>
    <name type="synonym">HLA-6.2</name>
    <name type="synonym">HLAE</name>
</gene>
<sequence>MVDGTLLLLLSEALALTQTWAGSHSLKYFHTSVSRPGRGEPRFISVGYVDDTQFVRFDNDAASPRMVPRAPWMEQEGSEYWDRETRSARDTAQIFRVNLRTLRGYYNQSEAGSHTLQWMHGCELGPDGRFLRGYEQFAYDGKDYLTLNEDLRSWTAVDTAAQISEQKSNDASEAEHQRAYLEDTCVEWLHKYLEKGKETLLHLEPPKTHVTHHPISDHEATLRCWALGFYPAEITLTWQQDGEGHTQDTELVETRPAGDGTFQKWAAVVVPSGEEQRYTCHVQHEGLPEPVTLRWKPASQPTIPIVGIIAGLVLLGSVVSGAVVAAVIWRKKSSGGKGGSYSKAEWSDSAQGSESHSL</sequence>
<comment type="function">
    <text evidence="7 9 12 13 14 17 22 23 27 28 29 31 33">Non-classical major histocompatibility class Ib molecule involved in immune self-nonself discrimination. In complex with B2M/beta-2-microglobulin binds nonamer self-peptides derived from the signal sequence of classical MHC class Ia molecules (VL9 peptides - VMAPRT[V/L][L/V/I/F]L) (PubMed:18083576, PubMed:18339401, PubMed:35705051, PubMed:37264229, PubMed:9754572). Peptide-bound HLA-E-B2M heterotrimeric complex primarily functions as a ligand for natural killer (NK) cell inhibitory receptor KLRD1-KLRC1, enabling NK cells to monitor the expression of other MHC class I molecules in healthy cells and to tolerate self (PubMed:17179229, PubMed:18083576, PubMed:37264229, PubMed:9486650, PubMed:9754572). Upon cellular stress, preferentially binds signal sequence-derived peptides from stress-induced chaperones and is no longer recognized by NK cell inhibitory receptor KLRD1-KLRC1, resulting in impaired protection from NK cells (PubMed:12461076). Binds signal sequence-derived peptides from non-classical MHC class Ib HLA-G molecules and acts as a ligand for NK cell activating receptor KLRD1-KLRC2, likely playing a role in the generation and effector functions of adaptive NK cells and in maternal-fetal tolerance during pregnancy (PubMed:30134159, PubMed:37264229, PubMed:9754572). Besides self-peptides, can also bind and present pathogen-derived peptides conformationally similar to VL9 peptides to alpha-beta T cell receptor (TCR) on unconventional CD8-positive cytotoxic T cells, ultimately triggering antimicrobial immune response (PubMed:16474394, PubMed:20195504, PubMed:30087334, PubMed:34228645). Presents HIV gag peptides (immunodominant KAFSPEVIPMF and subdominant KALGPAATL epitopes) predominantly to CD8-positive T cell clones expressing a TRAV17-containing TCR, triggering HLA-E-restricted T cell responses (PubMed:34228645). Presents mycobacterial peptides to HLA-E-restricted CD8-positive T cells eliciting both cytotoxic and immunoregulatory functions (PubMed:20195504, PubMed:35705051).</text>
</comment>
<comment type="function">
    <text evidence="5 20">(Microbial infection) Viruses like human cytomegalovirus have evolved an escape mechanism whereby virus-induced down-regulation of host MHC class I molecules is coupled to the binding of viral peptides to HLA-E, restoring HLA-E expression and inducing HLA-E-dependent NK cell immune tolerance to infected cells.</text>
</comment>
<comment type="function">
    <text evidence="8">(Microbial infection) May bind HIV-1 gag/Capsid protein p24-derived peptide (AISPRTLNA) on infected cells and may inhibit NK cell cytotoxicity, a mechanism that allows HIV-1 to escape immune recognition.</text>
</comment>
<comment type="function">
    <text evidence="26">(Microbial infection) Upon SARS-CoV-2 infection, may contribute to functional exhaustion of cytotoxic NK cells and CD8-positive T cells (PubMed:32859121). Binds SARS-CoV-2 S/Spike protein S1-derived peptide (LQPRTFLL) expressed on the surface of lung epithelial cells, inducing NK cell exhaustion and dampening of antiviral immune surveillance (PubMed:32859121).</text>
</comment>
<comment type="subunit">
    <text evidence="9 13 14 18 20 22 28 30 31 32 33">Forms a heterotrimer with B2M and a self- or a pathogen-derived peptide (peptide-bound HLA-E-B2M) (PubMed:18339401, PubMed:30087334, PubMed:35705051). Similarly to MHC class Ia assembly, HLA-E-B2M heterodimer interacts with components of the antigen processing machinery TAPBP and TAP1-TAP2 complex; this interaction is required for peptide loading and translocation to the cell surface (PubMed:9427624). Interacts with CALCR; this interaction is required for appropriate folding (PubMed:9427624). The optimum binding peptide is a nonamer (VL9) that is primarily derived from amino-acid residues 3-11 of the signal sequences of most HLA-A, -B, -C and -G molecules (PubMed:18083576, PubMed:18339401, PubMed:9660937, PubMed:9754572). The VL9 peptide anchors to five main sites in the peptide-binding groove of HLA-E (PubMed:18339401). Peptide-bound HLA-E-B2M complex interacts with KLRD1-KLRC1 receptor on NK cells (PubMed:18083576, PubMed:9486650). Binds with lower affinity to activating KLRD1-KLRC2 (PubMed:18083576, PubMed:23335510). The common subunit KLRC1 plays a prominent role in directly interacting with HLA-E (PubMed:18083576). Peptide-bound HLA-E-B2M interacts with the alpha-beta TCR on unconventional CD8+ T cells (PubMed:16474394). Peptide-free HLA-E interacts with HLA-F-B2M complex; this interaction may regulate the intracellular trafficking and the stability of peptide-free MHC class I open conformers (OCs).</text>
</comment>
<comment type="interaction">
    <interactant intactId="EBI-726583">
        <id>P13747</id>
    </interactant>
    <interactant intactId="EBI-2811134">
        <id>P30511</id>
        <label>HLA-F</label>
    </interactant>
    <organismsDiffer>false</organismsDiffer>
    <experiments>4</experiments>
</comment>
<comment type="subcellular location">
    <subcellularLocation>
        <location evidence="12 29 30">Cell membrane</location>
        <topology>Single-pass type I membrane protein</topology>
    </subcellularLocation>
    <subcellularLocation>
        <location evidence="12">Golgi apparatus membrane</location>
    </subcellularLocation>
</comment>
<comment type="subcellular location">
    <molecule>Soluble HLA class I histocompatibility antigen, alpha chain E</molecule>
    <subcellularLocation>
        <location evidence="12">Secreted</location>
    </subcellularLocation>
</comment>
<comment type="tissue specificity">
    <text evidence="12">Expressed in secretory endometrial cells during pregnancy (at protein level). The expression in nonlymphoid tissues is restricted to endothelial cells from all types of vessels, including arteries, veins, capillaries, and lymphatics (at protein level). In lymphoid organs, it is mainly expressed in endothelial venules, B and T cells, monocytes, macrophages, NK cells and megakaryocytes (at protein level).</text>
</comment>
<comment type="developmental stage">
    <text evidence="12">Expressed in extravillous trophoblast (at protein level).</text>
</comment>
<comment type="induction">
    <text evidence="12 29">Pro-inflammatory cytokines including TNF, IL1B and IFNG up-regulate membrane bound HLA-E expression on endothelial and NK cells and induce the release of soluble HLA-E (sHLA-E) in the extracellular compartment.</text>
</comment>
<comment type="PTM">
    <text evidence="12">N-glycosylated.</text>
</comment>
<comment type="PTM">
    <text evidence="12">The soluble form (sHLA-E) can be partly produced by proteolytic cleavage at the cell surface (shedding) by a matrix metalloproteinase. Alternative splicing is also suggested as a mechanism for generation of sHLA-E, although it remains to be proved.</text>
</comment>
<comment type="polymorphism">
    <text evidence="4 6 10 11 16 19 21 24 25">The following alleles are known: E*01:01 and E*01:03 (PubMed:10064069, PubMed:16570139, PubMed:16702430, PubMed:28127896, PubMed:3131426). The frequency of E*01:01 and E*01:03 alleles in the population is about equal suggesting balanced selection in diverse populations. Evolutionary studies suggest that E*01:03 is the original allele (PubMed:12445303). Two other alleles has been described E*01:02 and E*01:04 (PubMed:1977695, PubMed:3260916). Allele E*01:02 was found to be identical to HLA E*01:01 (PubMed:22665232, PubMed:3260916). The existence of allele E*01:04 is uncertain as it could not be confirmed in further studies (PubMed:12445303, PubMed:1977695). The sequence shown is that of E*01:03 (PubMed:10064069, PubMed:16570139, PubMed:16702430, PubMed:28127896).</text>
</comment>
<comment type="similarity">
    <text evidence="37">Belongs to the MHC class I family.</text>
</comment>
<keyword id="KW-0002">3D-structure</keyword>
<keyword id="KW-1064">Adaptive immunity</keyword>
<keyword id="KW-1003">Cell membrane</keyword>
<keyword id="KW-1015">Disulfide bond</keyword>
<keyword id="KW-0325">Glycoprotein</keyword>
<keyword id="KW-0333">Golgi apparatus</keyword>
<keyword id="KW-0945">Host-virus interaction</keyword>
<keyword id="KW-0391">Immunity</keyword>
<keyword id="KW-0399">Innate immunity</keyword>
<keyword id="KW-0472">Membrane</keyword>
<keyword id="KW-0490">MHC I</keyword>
<keyword id="KW-0597">Phosphoprotein</keyword>
<keyword id="KW-1267">Proteomics identification</keyword>
<keyword id="KW-1185">Reference proteome</keyword>
<keyword id="KW-0964">Secreted</keyword>
<keyword id="KW-0732">Signal</keyword>
<keyword id="KW-0812">Transmembrane</keyword>
<keyword id="KW-1133">Transmembrane helix</keyword>
<feature type="signal peptide" evidence="2">
    <location>
        <begin position="1"/>
        <end position="21"/>
    </location>
</feature>
<feature type="chain" id="PRO_0000018882" description="HLA class I histocompatibility antigen, alpha chain E">
    <location>
        <begin position="22"/>
        <end position="358"/>
    </location>
</feature>
<feature type="chain" id="PRO_0000445757" description="Soluble HLA class I histocompatibility antigen, alpha chain E">
    <location>
        <begin position="22"/>
        <end status="unknown"/>
    </location>
</feature>
<feature type="topological domain" description="Extracellular" evidence="2">
    <location>
        <begin position="22"/>
        <end position="305"/>
    </location>
</feature>
<feature type="transmembrane region" description="Helical" evidence="2">
    <location>
        <begin position="306"/>
        <end position="329"/>
    </location>
</feature>
<feature type="topological domain" description="Cytoplasmic" evidence="2">
    <location>
        <begin position="330"/>
        <end position="358"/>
    </location>
</feature>
<feature type="domain" description="Ig-like C1-type">
    <location>
        <begin position="206"/>
        <end position="294"/>
    </location>
</feature>
<feature type="region of interest" description="Alpha-1">
    <location>
        <begin position="22"/>
        <end position="111"/>
    </location>
</feature>
<feature type="region of interest" description="Alpha-2">
    <location>
        <begin position="112"/>
        <end position="203"/>
    </location>
</feature>
<feature type="region of interest" description="Alpha-3">
    <location>
        <begin position="204"/>
        <end position="295"/>
    </location>
</feature>
<feature type="region of interest" description="Connecting peptide">
    <location>
        <begin position="296"/>
        <end position="305"/>
    </location>
</feature>
<feature type="region of interest" description="Disordered" evidence="3">
    <location>
        <begin position="333"/>
        <end position="358"/>
    </location>
</feature>
<feature type="compositionally biased region" description="Polar residues" evidence="3">
    <location>
        <begin position="348"/>
        <end position="358"/>
    </location>
</feature>
<feature type="binding site" evidence="22 28 40">
    <location>
        <position position="28"/>
    </location>
    <ligand>
        <name>a peptide antigen</name>
        <dbReference type="ChEBI" id="CHEBI:166823"/>
        <label>1</label>
        <note>pathogen-derived peptide antigen</note>
    </ligand>
</feature>
<feature type="binding site" evidence="28 39 40">
    <location>
        <position position="84"/>
    </location>
    <ligand>
        <name>a peptide antigen</name>
        <dbReference type="ChEBI" id="CHEBI:166823"/>
        <label>1</label>
        <note>pathogen-derived peptide antigen</note>
    </ligand>
</feature>
<feature type="binding site" evidence="28 40">
    <location>
        <position position="87"/>
    </location>
    <ligand>
        <name>a peptide antigen</name>
        <dbReference type="ChEBI" id="CHEBI:166823"/>
        <label>1</label>
        <note>pathogen-derived peptide antigen</note>
    </ligand>
</feature>
<feature type="binding site" evidence="28 39 40">
    <location>
        <position position="98"/>
    </location>
    <ligand>
        <name>a peptide antigen</name>
        <dbReference type="ChEBI" id="CHEBI:166823"/>
        <label>1</label>
        <note>pathogen-derived peptide antigen</note>
    </ligand>
</feature>
<feature type="binding site" evidence="14">
    <location>
        <position position="98"/>
    </location>
    <ligand>
        <name>a peptide antigen</name>
        <dbReference type="ChEBI" id="CHEBI:166823"/>
        <label>2</label>
        <note>self-peptide antigen</note>
    </ligand>
</feature>
<feature type="binding site" evidence="28 39 40">
    <location>
        <position position="105"/>
    </location>
    <ligand>
        <name>a peptide antigen</name>
        <dbReference type="ChEBI" id="CHEBI:166823"/>
        <label>1</label>
        <note>pathogen-derived peptide antigen</note>
    </ligand>
</feature>
<feature type="binding site" evidence="14">
    <location>
        <position position="105"/>
    </location>
    <ligand>
        <name>a peptide antigen</name>
        <dbReference type="ChEBI" id="CHEBI:166823"/>
        <label>2</label>
        <note>self-peptide antigen</note>
    </ligand>
</feature>
<feature type="binding site" evidence="22 28 39 40">
    <location>
        <position position="164"/>
    </location>
    <ligand>
        <name>a peptide antigen</name>
        <dbReference type="ChEBI" id="CHEBI:166823"/>
        <label>1</label>
        <note>pathogen-derived peptide antigen</note>
    </ligand>
</feature>
<feature type="binding site" evidence="14">
    <location>
        <position position="164"/>
    </location>
    <ligand>
        <name>a peptide antigen</name>
        <dbReference type="ChEBI" id="CHEBI:166823"/>
        <label>2</label>
        <note>self-peptide antigen</note>
    </ligand>
</feature>
<feature type="binding site" evidence="22 28 39 40">
    <location>
        <position position="167"/>
    </location>
    <ligand>
        <name>a peptide antigen</name>
        <dbReference type="ChEBI" id="CHEBI:166823"/>
        <label>1</label>
        <note>pathogen-derived peptide antigen</note>
    </ligand>
</feature>
<feature type="binding site" evidence="14">
    <location>
        <position position="167"/>
    </location>
    <ligand>
        <name>a peptide antigen</name>
        <dbReference type="ChEBI" id="CHEBI:166823"/>
        <label>2</label>
        <note>self-peptide antigen</note>
    </ligand>
</feature>
<feature type="binding site" evidence="14">
    <location>
        <position position="177"/>
    </location>
    <ligand>
        <name>a peptide antigen</name>
        <dbReference type="ChEBI" id="CHEBI:166823"/>
        <label>2</label>
        <note>self-peptide antigen</note>
    </ligand>
</feature>
<feature type="binding site" evidence="22 28 39 40">
    <location>
        <position position="180"/>
    </location>
    <ligand>
        <name>a peptide antigen</name>
        <dbReference type="ChEBI" id="CHEBI:166823"/>
        <label>1</label>
        <note>pathogen-derived peptide antigen</note>
    </ligand>
</feature>
<feature type="binding site" evidence="14">
    <location>
        <position position="180"/>
    </location>
    <ligand>
        <name>a peptide antigen</name>
        <dbReference type="ChEBI" id="CHEBI:166823"/>
        <label>2</label>
        <note>self-peptide antigen</note>
    </ligand>
</feature>
<feature type="binding site" evidence="22 28 39">
    <location>
        <position position="192"/>
    </location>
    <ligand>
        <name>a peptide antigen</name>
        <dbReference type="ChEBI" id="CHEBI:166823"/>
        <label>1</label>
        <note>pathogen-derived peptide antigen</note>
    </ligand>
</feature>
<feature type="binding site" evidence="14">
    <location>
        <position position="192"/>
    </location>
    <ligand>
        <name>a peptide antigen</name>
        <dbReference type="ChEBI" id="CHEBI:166823"/>
        <label>2</label>
        <note>self-peptide antigen</note>
    </ligand>
</feature>
<feature type="modified residue" description="Phosphoserine" evidence="1">
    <location>
        <position position="353"/>
    </location>
</feature>
<feature type="glycosylation site" description="N-linked (GlcNAc...) asparagine" evidence="15">
    <location>
        <position position="107"/>
    </location>
</feature>
<feature type="disulfide bond" evidence="14 22 28 39">
    <location>
        <begin position="122"/>
        <end position="185"/>
    </location>
</feature>
<feature type="disulfide bond" evidence="14 22 28 39">
    <location>
        <begin position="224"/>
        <end position="280"/>
    </location>
</feature>
<feature type="sequence variant" id="VAR_059510" description="In dbSNP:rs1059510.">
    <original>N</original>
    <variation>K</variation>
    <location>
        <position position="98"/>
    </location>
</feature>
<feature type="sequence variant" id="VAR_016651" description="In allele E*01:01; dbSNP:rs1264457." evidence="34">
    <original>G</original>
    <variation>R</variation>
    <location>
        <position position="128"/>
    </location>
</feature>
<feature type="sequence variant" id="VAR_016652" description="In allele E*01:04; dbSNP:rs41562314.">
    <original>R</original>
    <variation>G</variation>
    <location>
        <position position="178"/>
    </location>
</feature>
<feature type="mutagenesis site" description="Has no impact on the affinity for KLRD1-KLRC1." evidence="13">
    <original>R</original>
    <variation>A</variation>
    <location>
        <position position="83"/>
    </location>
</feature>
<feature type="mutagenesis site" description="Reduces the affinity for KLRD1-KLRC1." evidence="13">
    <original>R</original>
    <variation>A</variation>
    <location>
        <position position="86"/>
    </location>
</feature>
<feature type="mutagenesis site" description="Has no impact on the affinity for KLRD1-KLRC1." evidence="13">
    <original>D</original>
    <variation>A</variation>
    <location>
        <position position="90"/>
    </location>
</feature>
<feature type="mutagenesis site" description="Impairs the recognition by KLRD1-KLRC1." evidence="13">
    <original>Q</original>
    <variation>A</variation>
    <location>
        <position position="93"/>
    </location>
</feature>
<feature type="mutagenesis site" description="Abolishes the recognition by KLRD1-KLRC1." evidence="13">
    <original>R</original>
    <variation>A</variation>
    <location>
        <position position="96"/>
    </location>
</feature>
<feature type="mutagenesis site" description="Impairs the recognition by KLRD1-KLRC1." evidence="13">
    <original>V</original>
    <variation>A</variation>
    <location>
        <position position="97"/>
    </location>
</feature>
<feature type="mutagenesis site" description="Reduces the affinity for KLRD1-KLRC1." evidence="13">
    <original>R</original>
    <variation>A</variation>
    <location>
        <position position="100"/>
    </location>
</feature>
<feature type="mutagenesis site" description="Has no impact on the affinity for KLRD1-KLRC1." evidence="13">
    <original>E</original>
    <variation>A</variation>
    <location>
        <position position="110"/>
    </location>
</feature>
<feature type="mutagenesis site" description="Has no impact on the affinity for KLRD1-KLRC1." evidence="13">
    <original>R</original>
    <variation>A</variation>
    <location>
        <position position="129"/>
    </location>
</feature>
<feature type="mutagenesis site" description="Impairs folding." evidence="13">
    <original>K</original>
    <variation>A</variation>
    <location>
        <position position="167"/>
    </location>
</feature>
<feature type="mutagenesis site" description="Has no impact on the affinity for KLRD1-KLRC1." evidence="13">
    <original>D</original>
    <variation>A</variation>
    <location>
        <position position="170"/>
    </location>
</feature>
<feature type="mutagenesis site" description="Impairs the recognition by KLRD1-KLRC1." evidence="13">
    <original>E</original>
    <variation>A</variation>
    <location>
        <position position="173"/>
    </location>
</feature>
<feature type="mutagenesis site" description="Has no impact on the affinity for KLRD1-KLRC1." evidence="13">
    <original>E</original>
    <variation>A</variation>
    <location>
        <position position="175"/>
    </location>
</feature>
<feature type="mutagenesis site" description="Has no impact on the affinity for KLRD1-KLRC1." evidence="13">
    <original>H</original>
    <variation>A</variation>
    <location>
        <position position="176"/>
    </location>
</feature>
<feature type="mutagenesis site" description="Impairs the recognition by KLRD1-KLRC1." evidence="13">
    <original>D</original>
    <variation>A</variation>
    <location>
        <position position="183"/>
    </location>
</feature>
<feature type="mutagenesis site" description="Reduces the affinity for KLRD1-KLRC1." evidence="13">
    <original>E</original>
    <variation>A</variation>
    <location>
        <position position="187"/>
    </location>
</feature>
<feature type="mutagenesis site" description="Has no impact on the affinity for KLRD1-KLRC1." evidence="13">
    <original>T</original>
    <variation>A</variation>
    <location>
        <position position="235"/>
    </location>
</feature>
<feature type="sequence conflict" description="In Ref. 1; AAA52655." evidence="37" ref="1">
    <original>L</original>
    <variation>S</variation>
    <location>
        <position position="10"/>
    </location>
</feature>
<feature type="sequence conflict" description="In Ref. 3; AAA59835." evidence="37" ref="3">
    <original>G</original>
    <variation>R</variation>
    <location>
        <position position="104"/>
    </location>
</feature>
<feature type="strand" evidence="43">
    <location>
        <begin position="24"/>
        <end position="33"/>
    </location>
</feature>
<feature type="strand" evidence="43">
    <location>
        <begin position="38"/>
        <end position="40"/>
    </location>
</feature>
<feature type="strand" evidence="43">
    <location>
        <begin position="42"/>
        <end position="49"/>
    </location>
</feature>
<feature type="strand" evidence="43">
    <location>
        <begin position="52"/>
        <end position="58"/>
    </location>
</feature>
<feature type="strand" evidence="43">
    <location>
        <begin position="61"/>
        <end position="63"/>
    </location>
</feature>
<feature type="strand" evidence="43">
    <location>
        <begin position="67"/>
        <end position="70"/>
    </location>
</feature>
<feature type="helix" evidence="43">
    <location>
        <begin position="71"/>
        <end position="75"/>
    </location>
</feature>
<feature type="helix" evidence="43">
    <location>
        <begin position="78"/>
        <end position="105"/>
    </location>
</feature>
<feature type="strand" evidence="42">
    <location>
        <begin position="110"/>
        <end position="112"/>
    </location>
</feature>
<feature type="strand" evidence="43">
    <location>
        <begin position="115"/>
        <end position="124"/>
    </location>
</feature>
<feature type="strand" evidence="43">
    <location>
        <begin position="128"/>
        <end position="139"/>
    </location>
</feature>
<feature type="strand" evidence="43">
    <location>
        <begin position="142"/>
        <end position="147"/>
    </location>
</feature>
<feature type="strand" evidence="43">
    <location>
        <begin position="154"/>
        <end position="156"/>
    </location>
</feature>
<feature type="helix" evidence="43">
    <location>
        <begin position="159"/>
        <end position="170"/>
    </location>
</feature>
<feature type="helix" evidence="43">
    <location>
        <begin position="173"/>
        <end position="182"/>
    </location>
</feature>
<feature type="helix" evidence="43">
    <location>
        <begin position="184"/>
        <end position="195"/>
    </location>
</feature>
<feature type="helix" evidence="43">
    <location>
        <begin position="197"/>
        <end position="200"/>
    </location>
</feature>
<feature type="strand" evidence="43">
    <location>
        <begin position="207"/>
        <end position="214"/>
    </location>
</feature>
<feature type="strand" evidence="43">
    <location>
        <begin position="216"/>
        <end position="232"/>
    </location>
</feature>
<feature type="strand" evidence="43">
    <location>
        <begin position="235"/>
        <end position="240"/>
    </location>
</feature>
<feature type="strand" evidence="41">
    <location>
        <begin position="243"/>
        <end position="245"/>
    </location>
</feature>
<feature type="strand" evidence="43">
    <location>
        <begin position="248"/>
        <end position="251"/>
    </location>
</feature>
<feature type="strand" evidence="43">
    <location>
        <begin position="258"/>
        <end position="260"/>
    </location>
</feature>
<feature type="strand" evidence="43">
    <location>
        <begin position="262"/>
        <end position="271"/>
    </location>
</feature>
<feature type="helix" evidence="43">
    <location>
        <begin position="275"/>
        <end position="277"/>
    </location>
</feature>
<feature type="strand" evidence="43">
    <location>
        <begin position="278"/>
        <end position="283"/>
    </location>
</feature>
<feature type="strand" evidence="43">
    <location>
        <begin position="287"/>
        <end position="289"/>
    </location>
</feature>
<feature type="strand" evidence="43">
    <location>
        <begin position="291"/>
        <end position="293"/>
    </location>
</feature>
<evidence type="ECO:0000250" key="1">
    <source>
        <dbReference type="UniProtKB" id="P01900"/>
    </source>
</evidence>
<evidence type="ECO:0000255" key="2"/>
<evidence type="ECO:0000256" key="3">
    <source>
        <dbReference type="SAM" id="MobiDB-lite"/>
    </source>
</evidence>
<evidence type="ECO:0000269" key="4">
    <source>
    </source>
</evidence>
<evidence type="ECO:0000269" key="5">
    <source>
    </source>
</evidence>
<evidence type="ECO:0000269" key="6">
    <source>
    </source>
</evidence>
<evidence type="ECO:0000269" key="7">
    <source>
    </source>
</evidence>
<evidence type="ECO:0000269" key="8">
    <source>
    </source>
</evidence>
<evidence type="ECO:0000269" key="9">
    <source>
    </source>
</evidence>
<evidence type="ECO:0000269" key="10">
    <source>
    </source>
</evidence>
<evidence type="ECO:0000269" key="11">
    <source>
    </source>
</evidence>
<evidence type="ECO:0000269" key="12">
    <source>
    </source>
</evidence>
<evidence type="ECO:0000269" key="13">
    <source>
    </source>
</evidence>
<evidence type="ECO:0000269" key="14">
    <source>
    </source>
</evidence>
<evidence type="ECO:0000269" key="15">
    <source>
    </source>
</evidence>
<evidence type="ECO:0000269" key="16">
    <source>
    </source>
</evidence>
<evidence type="ECO:0000269" key="17">
    <source>
    </source>
</evidence>
<evidence type="ECO:0000269" key="18">
    <source>
    </source>
</evidence>
<evidence type="ECO:0000269" key="19">
    <source>
    </source>
</evidence>
<evidence type="ECO:0000269" key="20">
    <source>
    </source>
</evidence>
<evidence type="ECO:0000269" key="21">
    <source>
    </source>
</evidence>
<evidence type="ECO:0000269" key="22">
    <source>
    </source>
</evidence>
<evidence type="ECO:0000269" key="23">
    <source>
    </source>
</evidence>
<evidence type="ECO:0000269" key="24">
    <source>
    </source>
</evidence>
<evidence type="ECO:0000269" key="25">
    <source>
    </source>
</evidence>
<evidence type="ECO:0000269" key="26">
    <source>
    </source>
</evidence>
<evidence type="ECO:0000269" key="27">
    <source>
    </source>
</evidence>
<evidence type="ECO:0000269" key="28">
    <source>
    </source>
</evidence>
<evidence type="ECO:0000269" key="29">
    <source>
    </source>
</evidence>
<evidence type="ECO:0000269" key="30">
    <source>
    </source>
</evidence>
<evidence type="ECO:0000269" key="31">
    <source>
    </source>
</evidence>
<evidence type="ECO:0000269" key="32">
    <source>
    </source>
</evidence>
<evidence type="ECO:0000269" key="33">
    <source>
    </source>
</evidence>
<evidence type="ECO:0000269" key="34">
    <source ref="11"/>
</evidence>
<evidence type="ECO:0000303" key="35">
    <source>
    </source>
</evidence>
<evidence type="ECO:0000303" key="36">
    <source>
    </source>
</evidence>
<evidence type="ECO:0000305" key="37"/>
<evidence type="ECO:0000312" key="38">
    <source>
        <dbReference type="HGNC" id="HGNC:4962"/>
    </source>
</evidence>
<evidence type="ECO:0007744" key="39">
    <source>
        <dbReference type="PDB" id="7P49"/>
    </source>
</evidence>
<evidence type="ECO:0007744" key="40">
    <source>
        <dbReference type="PDB" id="7P4B"/>
    </source>
</evidence>
<evidence type="ECO:0007829" key="41">
    <source>
        <dbReference type="PDB" id="6GH1"/>
    </source>
</evidence>
<evidence type="ECO:0007829" key="42">
    <source>
        <dbReference type="PDB" id="7BH8"/>
    </source>
</evidence>
<evidence type="ECO:0007829" key="43">
    <source>
        <dbReference type="PDB" id="7P4B"/>
    </source>
</evidence>
<accession>P13747</accession>
<accession>E2G051</accession>
<accession>Q30169</accession>
<accession>Q6DU44</accession>
<accession>Q9BT83</accession>
<accession>Q9GIY7</accession>
<accession>Q9GIY8</accession>